<reference key="1">
    <citation type="journal article" date="2002" name="Genomics">
        <title>The human and mouse replication-dependent histone genes.</title>
        <authorList>
            <person name="Marzluff W.F."/>
            <person name="Gongidi P."/>
            <person name="Woods K.R."/>
            <person name="Jin J."/>
            <person name="Maltais L.J."/>
        </authorList>
    </citation>
    <scope>NUCLEOTIDE SEQUENCE [GENOMIC DNA]</scope>
</reference>
<reference key="2">
    <citation type="journal article" date="2004" name="Gene">
        <title>Functional characterization of a human histone gene cluster duplication.</title>
        <authorList>
            <person name="Braastad C.D."/>
            <person name="Hovhannisyan H."/>
            <person name="van Wijnen A.J."/>
            <person name="Stein J.L."/>
            <person name="Stein G.S."/>
        </authorList>
    </citation>
    <scope>NUCLEOTIDE SEQUENCE [GENOMIC DNA]</scope>
</reference>
<reference key="3">
    <citation type="journal article" date="2006" name="Nature">
        <title>The DNA sequence and biological annotation of human chromosome 1.</title>
        <authorList>
            <person name="Gregory S.G."/>
            <person name="Barlow K.F."/>
            <person name="McLay K.E."/>
            <person name="Kaul R."/>
            <person name="Swarbreck D."/>
            <person name="Dunham A."/>
            <person name="Scott C.E."/>
            <person name="Howe K.L."/>
            <person name="Woodfine K."/>
            <person name="Spencer C.C.A."/>
            <person name="Jones M.C."/>
            <person name="Gillson C."/>
            <person name="Searle S."/>
            <person name="Zhou Y."/>
            <person name="Kokocinski F."/>
            <person name="McDonald L."/>
            <person name="Evans R."/>
            <person name="Phillips K."/>
            <person name="Atkinson A."/>
            <person name="Cooper R."/>
            <person name="Jones C."/>
            <person name="Hall R.E."/>
            <person name="Andrews T.D."/>
            <person name="Lloyd C."/>
            <person name="Ainscough R."/>
            <person name="Almeida J.P."/>
            <person name="Ambrose K.D."/>
            <person name="Anderson F."/>
            <person name="Andrew R.W."/>
            <person name="Ashwell R.I.S."/>
            <person name="Aubin K."/>
            <person name="Babbage A.K."/>
            <person name="Bagguley C.L."/>
            <person name="Bailey J."/>
            <person name="Beasley H."/>
            <person name="Bethel G."/>
            <person name="Bird C.P."/>
            <person name="Bray-Allen S."/>
            <person name="Brown J.Y."/>
            <person name="Brown A.J."/>
            <person name="Buckley D."/>
            <person name="Burton J."/>
            <person name="Bye J."/>
            <person name="Carder C."/>
            <person name="Chapman J.C."/>
            <person name="Clark S.Y."/>
            <person name="Clarke G."/>
            <person name="Clee C."/>
            <person name="Cobley V."/>
            <person name="Collier R.E."/>
            <person name="Corby N."/>
            <person name="Coville G.J."/>
            <person name="Davies J."/>
            <person name="Deadman R."/>
            <person name="Dunn M."/>
            <person name="Earthrowl M."/>
            <person name="Ellington A.G."/>
            <person name="Errington H."/>
            <person name="Frankish A."/>
            <person name="Frankland J."/>
            <person name="French L."/>
            <person name="Garner P."/>
            <person name="Garnett J."/>
            <person name="Gay L."/>
            <person name="Ghori M.R.J."/>
            <person name="Gibson R."/>
            <person name="Gilby L.M."/>
            <person name="Gillett W."/>
            <person name="Glithero R.J."/>
            <person name="Grafham D.V."/>
            <person name="Griffiths C."/>
            <person name="Griffiths-Jones S."/>
            <person name="Grocock R."/>
            <person name="Hammond S."/>
            <person name="Harrison E.S.I."/>
            <person name="Hart E."/>
            <person name="Haugen E."/>
            <person name="Heath P.D."/>
            <person name="Holmes S."/>
            <person name="Holt K."/>
            <person name="Howden P.J."/>
            <person name="Hunt A.R."/>
            <person name="Hunt S.E."/>
            <person name="Hunter G."/>
            <person name="Isherwood J."/>
            <person name="James R."/>
            <person name="Johnson C."/>
            <person name="Johnson D."/>
            <person name="Joy A."/>
            <person name="Kay M."/>
            <person name="Kershaw J.K."/>
            <person name="Kibukawa M."/>
            <person name="Kimberley A.M."/>
            <person name="King A."/>
            <person name="Knights A.J."/>
            <person name="Lad H."/>
            <person name="Laird G."/>
            <person name="Lawlor S."/>
            <person name="Leongamornlert D.A."/>
            <person name="Lloyd D.M."/>
            <person name="Loveland J."/>
            <person name="Lovell J."/>
            <person name="Lush M.J."/>
            <person name="Lyne R."/>
            <person name="Martin S."/>
            <person name="Mashreghi-Mohammadi M."/>
            <person name="Matthews L."/>
            <person name="Matthews N.S.W."/>
            <person name="McLaren S."/>
            <person name="Milne S."/>
            <person name="Mistry S."/>
            <person name="Moore M.J.F."/>
            <person name="Nickerson T."/>
            <person name="O'Dell C.N."/>
            <person name="Oliver K."/>
            <person name="Palmeiri A."/>
            <person name="Palmer S.A."/>
            <person name="Parker A."/>
            <person name="Patel D."/>
            <person name="Pearce A.V."/>
            <person name="Peck A.I."/>
            <person name="Pelan S."/>
            <person name="Phelps K."/>
            <person name="Phillimore B.J."/>
            <person name="Plumb R."/>
            <person name="Rajan J."/>
            <person name="Raymond C."/>
            <person name="Rouse G."/>
            <person name="Saenphimmachak C."/>
            <person name="Sehra H.K."/>
            <person name="Sheridan E."/>
            <person name="Shownkeen R."/>
            <person name="Sims S."/>
            <person name="Skuce C.D."/>
            <person name="Smith M."/>
            <person name="Steward C."/>
            <person name="Subramanian S."/>
            <person name="Sycamore N."/>
            <person name="Tracey A."/>
            <person name="Tromans A."/>
            <person name="Van Helmond Z."/>
            <person name="Wall M."/>
            <person name="Wallis J.M."/>
            <person name="White S."/>
            <person name="Whitehead S.L."/>
            <person name="Wilkinson J.E."/>
            <person name="Willey D.L."/>
            <person name="Williams H."/>
            <person name="Wilming L."/>
            <person name="Wray P.W."/>
            <person name="Wu Z."/>
            <person name="Coulson A."/>
            <person name="Vaudin M."/>
            <person name="Sulston J.E."/>
            <person name="Durbin R.M."/>
            <person name="Hubbard T."/>
            <person name="Wooster R."/>
            <person name="Dunham I."/>
            <person name="Carter N.P."/>
            <person name="McVean G."/>
            <person name="Ross M.T."/>
            <person name="Harrow J."/>
            <person name="Olson M.V."/>
            <person name="Beck S."/>
            <person name="Rogers J."/>
            <person name="Bentley D.R."/>
        </authorList>
    </citation>
    <scope>NUCLEOTIDE SEQUENCE [LARGE SCALE GENOMIC DNA]</scope>
</reference>
<reference key="4">
    <citation type="journal article" date="2004" name="Genome Res.">
        <title>The status, quality, and expansion of the NIH full-length cDNA project: the Mammalian Gene Collection (MGC).</title>
        <authorList>
            <consortium name="The MGC Project Team"/>
        </authorList>
    </citation>
    <scope>NUCLEOTIDE SEQUENCE [LARGE SCALE MRNA]</scope>
</reference>
<reference key="5">
    <citation type="journal article" date="2005" name="Biochemistry">
        <title>Modifications of human histone H3 variants during mitosis.</title>
        <authorList>
            <person name="Garcia B.A."/>
            <person name="Barber C.M."/>
            <person name="Hake S.B."/>
            <person name="Ptak C."/>
            <person name="Turner F.B."/>
            <person name="Busby S.A."/>
            <person name="Shabanowitz J."/>
            <person name="Moran R.G."/>
            <person name="Allis C.D."/>
            <person name="Hunt D.F."/>
        </authorList>
    </citation>
    <scope>PROTEIN SEQUENCE OF 28-41</scope>
    <scope>METHYLATION AT LYS-10; LYS-28 AND LYS-37</scope>
    <scope>PHOSPHORYLATION AT THR-4; SER-11 AND SER-29</scope>
    <scope>ACETYLATION AT LYS-10 AND LYS-15</scope>
    <scope>IDENTIFICATION BY MASS SPECTROMETRY</scope>
</reference>
<reference key="6">
    <citation type="journal article" date="1999" name="J. Biol. Chem.">
        <title>Identification of a novel phosphorylation site on histone H3 coupled with mitotic chromosome condensation.</title>
        <authorList>
            <person name="Goto H."/>
            <person name="Tomono Y."/>
            <person name="Ajiro K."/>
            <person name="Kosako H."/>
            <person name="Fujita M."/>
            <person name="Sakurai M."/>
            <person name="Okawa K."/>
            <person name="Iwamatsu A."/>
            <person name="Okigaki T."/>
            <person name="Takahashi T."/>
            <person name="Inagaki M."/>
        </authorList>
    </citation>
    <scope>PROTEIN SEQUENCE OF 58-64; 117-120 AND 124-135</scope>
    <scope>PHOSPHORYLATION AT SER-11 AND SER-29</scope>
</reference>
<reference key="7">
    <citation type="journal article" date="1981" name="J. Biochem.">
        <title>Human spleen histone H3. Isolation and amino acid sequence.</title>
        <authorList>
            <person name="Ohe Y."/>
            <person name="Iwai K."/>
        </authorList>
    </citation>
    <scope>PARTIAL PROTEIN SEQUENCE</scope>
    <source>
        <tissue>Spleen</tissue>
    </source>
</reference>
<reference key="8">
    <citation type="journal article" date="2001" name="Nature">
        <title>Methylation of histone H3 lysine 9 creates a binding site for HP1 proteins.</title>
        <authorList>
            <person name="Lachner M."/>
            <person name="O'Carroll D."/>
            <person name="Rea S."/>
            <person name="Mechtler K."/>
            <person name="Jenuwein T."/>
        </authorList>
    </citation>
    <scope>METHYLATION AT LYS-10</scope>
</reference>
<reference key="9">
    <citation type="journal article" date="2002" name="Genes Cells">
        <title>Aurora-B phosphorylates Histone H3 at serine28 with regard to the mitotic chromosome condensation.</title>
        <authorList>
            <person name="Goto H."/>
            <person name="Yasui Y."/>
            <person name="Nigg E.A."/>
            <person name="Inagaki M."/>
        </authorList>
    </citation>
    <scope>PHOSPHORYLATION AT SER-11 AND SER-29</scope>
</reference>
<reference key="10">
    <citation type="journal article" date="2003" name="Nucleic Acids Res.">
        <title>Novel mitosis-specific phosphorylation of histone H3 at Thr11 mediated by Dlk/ZIP kinase.</title>
        <authorList>
            <person name="Preuss U."/>
            <person name="Landsberg G."/>
            <person name="Scheidtmann K.H."/>
        </authorList>
    </citation>
    <scope>PHOSPHORYLATION AT SER-11 AND THR-12</scope>
</reference>
<reference key="11">
    <citation type="journal article" date="2004" name="J. Biol. Chem.">
        <title>Ligand-dependent activation of the farnesoid X-receptor directs arginine methylation of histone H3 by CARM1.</title>
        <authorList>
            <person name="Ananthanarayanan M."/>
            <person name="Li S."/>
            <person name="Balasubramaniyan N."/>
            <person name="Suchy F.J."/>
            <person name="Walsh M.J."/>
        </authorList>
    </citation>
    <scope>METHYLATION AT ARG-18</scope>
</reference>
<reference key="12">
    <citation type="journal article" date="2004" name="Nature">
        <title>Methylated lysine 79 of histone H3 targets 53BP1 to DNA double-strand breaks.</title>
        <authorList>
            <person name="Huyen Y."/>
            <person name="Zgheib O."/>
            <person name="Ditullio R.A. Jr."/>
            <person name="Gorgoulis V.G."/>
            <person name="Zacharatos P."/>
            <person name="Petty T.J."/>
            <person name="Sheston E.A."/>
            <person name="Mellert H.S."/>
            <person name="Stavridi E.S."/>
            <person name="Halazonetis T.D."/>
        </authorList>
    </citation>
    <scope>METHYLATION AT LYS-80</scope>
</reference>
<reference key="13">
    <citation type="journal article" date="2004" name="Science">
        <title>Human PAD4 regulates histone arginine methylation levels via demethylimination.</title>
        <authorList>
            <person name="Wang Y."/>
            <person name="Wysocka J."/>
            <person name="Sayegh J."/>
            <person name="Lee Y.-H."/>
            <person name="Perlin J.R."/>
            <person name="Leonelli L."/>
            <person name="Sonbuchner L.S."/>
            <person name="McDonald C.H."/>
            <person name="Cook R.G."/>
            <person name="Dou Y."/>
            <person name="Roeder R.G."/>
            <person name="Clarke S."/>
            <person name="Stallcup M.R."/>
            <person name="Allis C.D."/>
            <person name="Coonrod S.A."/>
        </authorList>
    </citation>
    <scope>CITRULLINATION AT ARG-9 AND ARG-18</scope>
    <scope>METHYLATION AT ARG-18</scope>
</reference>
<reference key="14">
    <citation type="journal article" date="2005" name="Genes Dev.">
        <title>The kinase haspin is required for mitotic histone H3 Thr 3 phosphorylation and normal metaphase chromosome alignment.</title>
        <authorList>
            <person name="Dai J."/>
            <person name="Sultan S."/>
            <person name="Taylor S.S."/>
            <person name="Higgins J.M.G."/>
        </authorList>
    </citation>
    <scope>PHOSPHORYLATION AT THR-4; SER-11 AND SER-29</scope>
</reference>
<reference key="15">
    <citation type="journal article" date="2005" name="J. Biol. Chem.">
        <title>Phosphorylation of Ser28 in histone H3 mediated by mixed lineage kinase-like mitogen-activated protein triple kinase alpha.</title>
        <authorList>
            <person name="Choi H.S."/>
            <person name="Choi B.Y."/>
            <person name="Cho Y.-Y."/>
            <person name="Zhu F."/>
            <person name="Bode A.M."/>
            <person name="Dong Z."/>
        </authorList>
    </citation>
    <scope>PHOSPHORYLATION AT SER-29</scope>
</reference>
<reference key="16">
    <citation type="journal article" date="2006" name="J. Biol. Chem.">
        <title>Expression patterns and post-translational modifications associated with mammalian histone H3 variants.</title>
        <authorList>
            <person name="Hake S.B."/>
            <person name="Garcia B.A."/>
            <person name="Duncan E.M."/>
            <person name="Kauer M."/>
            <person name="Dellaire G."/>
            <person name="Shabanowitz J."/>
            <person name="Bazett-Jones D.P."/>
            <person name="Allis C.D."/>
            <person name="Hunt D.F."/>
        </authorList>
    </citation>
    <scope>ACETYLATION AT LYS-10; LYS-15; LYS-19; LYS-24 AND LYS-28</scope>
    <scope>METHYLATION AT LYS-5; LYS-10; LYS-19; LYS-28; LYS-37; LYS-65; LYS-80 AND LYS-123</scope>
    <scope>IDENTIFICATION BY MASS SPECTROMETRY</scope>
</reference>
<reference key="17">
    <citation type="journal article" date="2006" name="Mol. Cell">
        <title>Histone H3 and H4 ubiquitylation by the CUL4-DDB-ROC1 ubiquitin ligase facilitates cellular response to DNA damage.</title>
        <authorList>
            <person name="Wang H."/>
            <person name="Zhai L."/>
            <person name="Xu J."/>
            <person name="Joo H.-Y."/>
            <person name="Jackson S."/>
            <person name="Erdjument-Bromage H."/>
            <person name="Tempst P."/>
            <person name="Xiong Y."/>
            <person name="Zhang Y."/>
        </authorList>
    </citation>
    <scope>UBIQUITINATION</scope>
</reference>
<reference key="18">
    <citation type="journal article" date="2006" name="Mol. Cell. Proteomics">
        <title>Quantitative proteomic analysis of post-translational modifications of human histones.</title>
        <authorList>
            <person name="Beck H.C."/>
            <person name="Nielsen E.C."/>
            <person name="Matthiesen R."/>
            <person name="Jensen L.H."/>
            <person name="Sehested M."/>
            <person name="Finn P."/>
            <person name="Grauslund M."/>
            <person name="Hansen A.M."/>
            <person name="Jensen O.N."/>
        </authorList>
    </citation>
    <scope>ACETYLATION AT LYS-10; LYS-15; LYS-19; LYS-24 AND LYS-28</scope>
    <scope>METHYLATION AT LYS-28; LYS-37 AND LYS-80</scope>
    <scope>IDENTIFICATION BY MASS SPECTROMETRY</scope>
</reference>
<reference key="19">
    <citation type="journal article" date="2006" name="Mol. Endocrinol.">
        <title>Coactivator-associated arginine methyltransferase-1 enhances nuclear factor-kappaB-mediated gene transcription through methylation of histone H3 at arginine 17.</title>
        <authorList>
            <person name="Miao F."/>
            <person name="Li S."/>
            <person name="Chavez V."/>
            <person name="Lanting L."/>
            <person name="Natarajan R."/>
        </authorList>
    </citation>
    <scope>ACETYLATION AT LYS-10 AND LYS-15</scope>
    <scope>METHYLATION AT ARG-18</scope>
    <scope>CITRULLINATION AT ARG-18</scope>
</reference>
<reference key="20">
    <citation type="journal article" date="2006" name="Proc. Natl. Acad. Sci. U.S.A.">
        <title>Structural basis for histone N-terminal recognition by human peptidylarginine deiminase 4.</title>
        <authorList>
            <person name="Arita K."/>
            <person name="Shimizu T."/>
            <person name="Hashimoto H."/>
            <person name="Hidaka Y."/>
            <person name="Yamada M."/>
            <person name="Sato M."/>
        </authorList>
    </citation>
    <scope>CITRULLINATION AT ARG-3; ARG-9; ARG-18 AND ARG-27</scope>
</reference>
<reference key="21">
    <citation type="journal article" date="2007" name="Genes Dev.">
        <title>PRMT6-mediated methylation of R2 in histone H3 antagonizes H3 K4 trimethylation.</title>
        <authorList>
            <person name="Hyllus D."/>
            <person name="Stein C."/>
            <person name="Schnabel K."/>
            <person name="Schiltz E."/>
            <person name="Imhof A."/>
            <person name="Dou Y."/>
            <person name="Hsieh J."/>
            <person name="Bauer U.M."/>
        </authorList>
    </citation>
    <scope>METHYLATION AT ARG-3 BY PRMT6</scope>
</reference>
<reference key="22">
    <citation type="journal article" date="2007" name="J. Biol. Chem.">
        <title>Organismal differences in post-translational modifications in histones H3 and H4.</title>
        <authorList>
            <person name="Garcia B.A."/>
            <person name="Hake S.B."/>
            <person name="Diaz R.L."/>
            <person name="Kauer M."/>
            <person name="Morris S.A."/>
            <person name="Recht J."/>
            <person name="Shabanowitz J."/>
            <person name="Mishra N."/>
            <person name="Strahl B.D."/>
            <person name="Allis C.D."/>
            <person name="Hunt D.F."/>
        </authorList>
    </citation>
    <scope>ACETYLATION AT LYS-5; LYS-10; LYS-15; LYS-19; LYS-24; LYS-28; LYS-37; LYS-57 AND LYS-80</scope>
    <scope>METHYLATION AT LYS-5; LYS-10; LYS-19; LYS-24; LYS-28; LYS-37; LYS-57; LYS-65; LYS-80 AND LYS-123</scope>
    <scope>IDENTIFICATION BY MASS SPECTROMETRY</scope>
</reference>
<reference key="23">
    <citation type="journal article" date="2007" name="J. Biol. Chem.">
        <title>Identification of histone H3 lysine 36 acetylation as a highly conserved histone modification.</title>
        <authorList>
            <person name="Morris S.A."/>
            <person name="Rao B."/>
            <person name="Garcia B.A."/>
            <person name="Hake S.B."/>
            <person name="Diaz R.L."/>
            <person name="Shabanowitz J."/>
            <person name="Hunt D.F."/>
            <person name="Allis C.D."/>
            <person name="Lieb J.D."/>
            <person name="Strahl B.D."/>
        </authorList>
    </citation>
    <scope>ACETYLATION AT LYS-37</scope>
</reference>
<reference key="24">
    <citation type="journal article" date="2007" name="Nature">
        <title>Methylation of histone H3R2 by PRMT6 and H3K4 by an MLL complex are mutually exclusive.</title>
        <authorList>
            <person name="Guccione E."/>
            <person name="Bassi C."/>
            <person name="Casadio F."/>
            <person name="Martinato F."/>
            <person name="Cesaroni M."/>
            <person name="Schuchlautz H."/>
            <person name="Luescher B."/>
            <person name="Amati B."/>
        </authorList>
    </citation>
    <scope>METHYLATION AT ARG-3 BY PRMT6</scope>
</reference>
<reference key="25">
    <citation type="journal article" date="2008" name="J. Biol. Chem.">
        <title>Arginine methylation of the histone H3 tail impedes effector binding.</title>
        <authorList>
            <person name="Iberg A.N."/>
            <person name="Espejo A."/>
            <person name="Cheng D."/>
            <person name="Kim D."/>
            <person name="Michaud-Levesque J."/>
            <person name="Richard S."/>
            <person name="Bedford M.T."/>
        </authorList>
    </citation>
    <scope>METHYLATION AT ARG-3 BY PRMT6</scope>
</reference>
<reference key="26">
    <citation type="journal article" date="2008" name="Nat. Cell Biol.">
        <title>Phosphorylation of histone H3 at threonine 11 establishes a novel chromatin mark for transcriptional regulation.</title>
        <authorList>
            <person name="Metzger E."/>
            <person name="Yin N."/>
            <person name="Wissmann M."/>
            <person name="Kunowska N."/>
            <person name="Fischer K."/>
            <person name="Friedrichs N."/>
            <person name="Patnaik D."/>
            <person name="Higgins J.M."/>
            <person name="Potier N."/>
            <person name="Scheidtmann K.H."/>
            <person name="Buettner R."/>
            <person name="Schule R."/>
        </authorList>
    </citation>
    <scope>PHOSPHORYLATION AT THR-12</scope>
</reference>
<reference key="27">
    <citation type="journal article" date="2009" name="J. Biol. Chem.">
        <title>Acetylation of histone H3 at the nucleosome dyad alters DNA-histone binding.</title>
        <authorList>
            <person name="Manohar M."/>
            <person name="Mooney A.M."/>
            <person name="North J.A."/>
            <person name="Nakkula R.J."/>
            <person name="Picking J.W."/>
            <person name="Edon A."/>
            <person name="Fishel R."/>
            <person name="Poirier M.G."/>
            <person name="Ottesen J.J."/>
        </authorList>
    </citation>
    <scope>ACETYLATION AT LYS-116 AND LYS-123</scope>
</reference>
<reference key="28">
    <citation type="journal article" date="2009" name="Nature">
        <title>JAK2 phosphorylates histone H3Y41 and excludes HP1alpha from chromatin.</title>
        <authorList>
            <person name="Dawson M.A."/>
            <person name="Bannister A.J."/>
            <person name="Gottgens B."/>
            <person name="Foster S.D."/>
            <person name="Bartke T."/>
            <person name="Green A.R."/>
            <person name="Kouzarides T."/>
        </authorList>
    </citation>
    <scope>PHOSPHORYLATION AT TYR-42</scope>
</reference>
<reference key="29">
    <citation type="journal article" date="2009" name="Sci. Signal.">
        <title>Quantitative phosphoproteomic analysis of T cell receptor signaling reveals system-wide modulation of protein-protein interactions.</title>
        <authorList>
            <person name="Mayya V."/>
            <person name="Lundgren D.H."/>
            <person name="Hwang S.-I."/>
            <person name="Rezaul K."/>
            <person name="Wu L."/>
            <person name="Eng J.K."/>
            <person name="Rodionov V."/>
            <person name="Han D.K."/>
        </authorList>
    </citation>
    <scope>PHOSPHORYLATION [LARGE SCALE ANALYSIS] AT THR-108</scope>
    <scope>IDENTIFICATION BY MASS SPECTROMETRY [LARGE SCALE ANALYSIS]</scope>
    <source>
        <tissue>Leukemic T-cell</tissue>
    </source>
</reference>
<reference key="30">
    <citation type="journal article" date="2010" name="Cell">
        <title>Quantitative interaction proteomics and genome-wide profiling of epigenetic histone marks and their readers.</title>
        <authorList>
            <person name="Vermeulen M."/>
            <person name="Eberl H.C."/>
            <person name="Matarese F."/>
            <person name="Marks H."/>
            <person name="Denissov S."/>
            <person name="Butter F."/>
            <person name="Lee K.K."/>
            <person name="Olsen J.V."/>
            <person name="Hyman A.A."/>
            <person name="Stunnenberg H.G."/>
            <person name="Mann M."/>
        </authorList>
    </citation>
    <scope>PHOSPHORYLATION AT SER-58 AND THR-81</scope>
</reference>
<reference key="31">
    <citation type="journal article" date="2010" name="Nature">
        <title>Phosphorylation of histone H3T6 by PKCbeta(I) controls demethylation at histone H3K4.</title>
        <authorList>
            <person name="Metzger E."/>
            <person name="Imhof A."/>
            <person name="Patel D."/>
            <person name="Kahl P."/>
            <person name="Hoffmeyer K."/>
            <person name="Friedrichs N."/>
            <person name="Muller J.M."/>
            <person name="Greschik H."/>
            <person name="Kirfel J."/>
            <person name="Ji S."/>
            <person name="Kunowska N."/>
            <person name="Beisenherz-Huss C."/>
            <person name="Gunther T."/>
            <person name="Buettner R."/>
            <person name="Schule R."/>
        </authorList>
    </citation>
    <scope>PHOSPHORYLATION AT THR-7</scope>
</reference>
<reference key="32">
    <citation type="journal article" date="2011" name="Cell">
        <title>Identification of 67 histone marks and histone lysine crotonylation as a new type of histone modification.</title>
        <authorList>
            <person name="Tan M."/>
            <person name="Luo H."/>
            <person name="Lee S."/>
            <person name="Jin F."/>
            <person name="Yang J.S."/>
            <person name="Montellier E."/>
            <person name="Buchou T."/>
            <person name="Cheng Z."/>
            <person name="Rousseaux S."/>
            <person name="Rajagopal N."/>
            <person name="Lu Z."/>
            <person name="Ye Z."/>
            <person name="Zhu Q."/>
            <person name="Wysocka J."/>
            <person name="Ye Y."/>
            <person name="Khochbin S."/>
            <person name="Ren B."/>
            <person name="Zhao Y."/>
        </authorList>
    </citation>
    <scope>CROTONYLATION AT LYS-5; LYS-10; LYS-19; LYS-24; LYS-28 AND LYS-57</scope>
</reference>
<reference key="33">
    <citation type="journal article" date="2011" name="Mol. Cell">
        <title>A specific function for the histone chaperone NASP to fine-tune a reservoir of soluble H3-H4 in the histone supply chain.</title>
        <authorList>
            <person name="Cook A.J."/>
            <person name="Gurard-Levin Z.A."/>
            <person name="Vassias I."/>
            <person name="Almouzni G."/>
        </authorList>
    </citation>
    <scope>INTERACTION WITH NASP</scope>
</reference>
<reference key="34">
    <citation type="journal article" date="2011" name="Mol. Cell. Proteomics">
        <title>Proteomic analysis of fatty-acylated proteins in mammalian cells with chemical reporters reveals S-acylation of histone H3 variants.</title>
        <authorList>
            <person name="Wilson J.P."/>
            <person name="Raghavan A.S."/>
            <person name="Yang Y.Y."/>
            <person name="Charron G."/>
            <person name="Hang H.C."/>
        </authorList>
    </citation>
    <scope>PALMITOYLATION AT CYS-111</scope>
    <scope>MUTAGENESIS OF CYS-111</scope>
    <scope>IDENTIFICATION BY MASS SPECTROMETRY</scope>
</reference>
<reference key="35">
    <citation type="journal article" date="2012" name="Cell">
        <title>PKM2 phosphorylates histone H3 and promotes gene transcription and tumorigenesis.</title>
        <authorList>
            <person name="Yang W."/>
            <person name="Xia Y."/>
            <person name="Hawke D."/>
            <person name="Li X."/>
            <person name="Liang J."/>
            <person name="Xing D."/>
            <person name="Aldape K."/>
            <person name="Hunter T."/>
            <person name="Alfred Yung W.K."/>
            <person name="Lu Z."/>
        </authorList>
    </citation>
    <scope>PHOSPHORYLATION AT THR-12</scope>
</reference>
<reference key="36">
    <citation type="journal article" date="2012" name="Mol. Cell">
        <title>Histone H3 lysine 56 methylation regulates DNA replication through its interaction with PCNA.</title>
        <authorList>
            <person name="Yu Y."/>
            <person name="Song C."/>
            <person name="Zhang Q."/>
            <person name="Dimaggio P.A."/>
            <person name="Garcia B.A."/>
            <person name="York A."/>
            <person name="Carey M.F."/>
            <person name="Grunstein M."/>
        </authorList>
    </citation>
    <scope>METHYLATION AT LYS-57</scope>
</reference>
<reference key="37">
    <citation type="journal article" date="2012" name="Mol. Cell">
        <title>Lysyl oxidase-like 2 deaminates lysine 4 in histone H3.</title>
        <authorList>
            <person name="Herranz N."/>
            <person name="Dave N."/>
            <person name="Millanes-Romero A."/>
            <person name="Morey L."/>
            <person name="Diaz V.M."/>
            <person name="Lorenz-Fonfria V."/>
            <person name="Gutierrez-Gallego R."/>
            <person name="Jeronimo C."/>
            <person name="Di Croce L."/>
            <person name="Garcia de Herreros A."/>
            <person name="Peiro S."/>
        </authorList>
    </citation>
    <scope>RETRACTED PAPER</scope>
</reference>
<reference key="38">
    <citation type="journal article" date="2016" name="Mol. Cell">
        <authorList>
            <person name="Herranz N."/>
            <person name="Dave N."/>
            <person name="Millanes-Romero A."/>
            <person name="Morey L."/>
            <person name="Diaz V.M."/>
            <person name="Lorenz-Fonfria V."/>
            <person name="Gutierrez-Gallego R."/>
            <person name="Jeronimo C."/>
            <person name="Di Croce L."/>
            <person name="Garcia de Herreros A."/>
            <person name="Peiro S."/>
        </authorList>
    </citation>
    <scope>RETRACTION NOTICE OF PUBMED:22483618</scope>
</reference>
<reference key="39">
    <citation type="journal article" date="2015" name="Proteomics">
        <title>N-terminome analysis of the human mitochondrial proteome.</title>
        <authorList>
            <person name="Vaca Jacome A.S."/>
            <person name="Rabilloud T."/>
            <person name="Schaeffer-Reiss C."/>
            <person name="Rompais M."/>
            <person name="Ayoub D."/>
            <person name="Lane L."/>
            <person name="Bairoch A."/>
            <person name="Van Dorsselaer A."/>
            <person name="Carapito C."/>
        </authorList>
    </citation>
    <scope>IDENTIFICATION BY MASS SPECTROMETRY [LARGE SCALE ANALYSIS]</scope>
</reference>
<reference key="40">
    <citation type="journal article" date="2012" name="Mol. Cell. Proteomics">
        <title>Lysine succinylation and lysine malonylation in histones.</title>
        <authorList>
            <person name="Xie Z."/>
            <person name="Dai J."/>
            <person name="Dai L."/>
            <person name="Tan M."/>
            <person name="Cheng Z."/>
            <person name="Wu Y."/>
            <person name="Boeke J.D."/>
            <person name="Zhao Y."/>
        </authorList>
    </citation>
    <scope>SUCCINYLATION AT LYS-15; LYS-57; LYS-80 AND LYS-123</scope>
</reference>
<reference key="41">
    <citation type="journal article" date="2013" name="Cell">
        <title>Regulation of transcription through acetylation of H3K122 on the lateral surface of the histone octamer.</title>
        <authorList>
            <person name="Tropberger P."/>
            <person name="Pott S."/>
            <person name="Keller C."/>
            <person name="Kamieniarz-Gdula K."/>
            <person name="Caron M."/>
            <person name="Richter F."/>
            <person name="Li G."/>
            <person name="Mittler G."/>
            <person name="Liu E.T."/>
            <person name="Buhler M."/>
            <person name="Margueron R."/>
            <person name="Schneider R."/>
        </authorList>
    </citation>
    <scope>ACETYLATION AT LYS-123</scope>
</reference>
<reference key="42">
    <citation type="journal article" date="2014" name="Nat. Chem. Biol.">
        <title>Lysine 2-hydroxyisobutyrylation is a widely distributed active histone mark.</title>
        <authorList>
            <person name="Dai L."/>
            <person name="Peng C."/>
            <person name="Montellier E."/>
            <person name="Lu Z."/>
            <person name="Chen Y."/>
            <person name="Ishii H."/>
            <person name="Debernardi A."/>
            <person name="Buchou T."/>
            <person name="Rousseaux S."/>
            <person name="Jin F."/>
            <person name="Sabari B.R."/>
            <person name="Deng Z."/>
            <person name="Allis C.D."/>
            <person name="Ren B."/>
            <person name="Khochbin S."/>
            <person name="Zhao Y."/>
        </authorList>
    </citation>
    <scope>HYDROXYBUTYRYLATION AT LYS-5; LYS-10; LYS-15; LYS-19; LYS-24; LYS-28; LYS-37; LYS-57; LYS-65; LYS-80 AND LYS-123</scope>
</reference>
<reference key="43">
    <citation type="journal article" date="2016" name="FEBS J.">
        <title>Lysyl oxidase-like 2 (LOXL2) oxidizes trimethylated lysine 4 in histone H3.</title>
        <authorList>
            <person name="Herranz N."/>
            <person name="Dave N."/>
            <person name="Millanes-Romero A."/>
            <person name="Pascual-Reguant L."/>
            <person name="Morey L."/>
            <person name="Diaz V.M."/>
            <person name="Lorenz-Fonfria V."/>
            <person name="Gutierrez-Gallego R."/>
            <person name="Jeronimo C."/>
            <person name="Iturbide A."/>
            <person name="Di Croce L."/>
            <person name="Garcia de Herreros A."/>
            <person name="Peiro S."/>
        </authorList>
    </citation>
    <scope>ALLYSINE AT LYS-5</scope>
</reference>
<reference key="44">
    <citation type="journal article" date="2016" name="Mol. Cell">
        <title>Dynamic competing histone H4 K5K8 acetylation and butyrylation are hallmarks of highly active gene promoters.</title>
        <authorList>
            <person name="Goudarzi A."/>
            <person name="Zhang D."/>
            <person name="Huang H."/>
            <person name="Barral S."/>
            <person name="Kwon O.K."/>
            <person name="Qi S."/>
            <person name="Tang Z."/>
            <person name="Buchou T."/>
            <person name="Vitte A.L."/>
            <person name="He T."/>
            <person name="Cheng Z."/>
            <person name="Montellier E."/>
            <person name="Gaucher J."/>
            <person name="Curtet S."/>
            <person name="Debernardi A."/>
            <person name="Charbonnier G."/>
            <person name="Puthier D."/>
            <person name="Petosa C."/>
            <person name="Panne D."/>
            <person name="Rousseaux S."/>
            <person name="Roeder R.G."/>
            <person name="Zhao Y."/>
            <person name="Khochbin S."/>
        </authorList>
    </citation>
    <scope>BUTYRYLATION AT LYS-10; LYS-19 AND LYS-24</scope>
</reference>
<reference key="45">
    <citation type="journal article" date="2016" name="Mol. Cell">
        <title>Metabolic regulation of gene expression by histone lysine beta-hydroxybutyrylation.</title>
        <authorList>
            <person name="Xie Z."/>
            <person name="Zhang D."/>
            <person name="Chung D."/>
            <person name="Tang Z."/>
            <person name="Huang H."/>
            <person name="Dai L."/>
            <person name="Qi S."/>
            <person name="Li J."/>
            <person name="Colak G."/>
            <person name="Chen Y."/>
            <person name="Xia C."/>
            <person name="Peng C."/>
            <person name="Ruan H."/>
            <person name="Kirkey M."/>
            <person name="Wang D."/>
            <person name="Jensen L.M."/>
            <person name="Kwon O.K."/>
            <person name="Lee S."/>
            <person name="Pletcher S.D."/>
            <person name="Tan M."/>
            <person name="Lombard D.B."/>
            <person name="White K.P."/>
            <person name="Zhao H."/>
            <person name="Li J."/>
            <person name="Roeder R.G."/>
            <person name="Yang X."/>
            <person name="Zhao Y."/>
        </authorList>
    </citation>
    <scope>HYDROXYBUTYRYLATION AT LYS-5; LYS-10; LYS-15; LYS-19; LYS-24; LYS-28; LYS-57; LYS-80 AND LYS-123</scope>
</reference>
<reference key="46">
    <citation type="journal article" date="2016" name="Nat. Commun.">
        <title>SIRT7 is a histone desuccinylase that functionally links to chromatin compaction and genome stability.</title>
        <authorList>
            <person name="Li L."/>
            <person name="Shi L."/>
            <person name="Yang S."/>
            <person name="Yan R."/>
            <person name="Zhang D."/>
            <person name="Yang J."/>
            <person name="He L."/>
            <person name="Li W."/>
            <person name="Yi X."/>
            <person name="Sun L."/>
            <person name="Liang J."/>
            <person name="Cheng Z."/>
            <person name="Shi L."/>
            <person name="Shang Y."/>
            <person name="Yu W."/>
        </authorList>
    </citation>
    <scope>SUCCINYLATION AT LYS-123</scope>
    <scope>DESUSUCCINYLATION</scope>
</reference>
<reference key="47">
    <citation type="journal article" date="2017" name="Cell Res.">
        <title>Class I histone deacetylases are major histone decrotonylases: evidence for critical and broad function of histone crotonylation in transcription.</title>
        <authorList>
            <person name="Wei W."/>
            <person name="Liu X."/>
            <person name="Chen J."/>
            <person name="Gao S."/>
            <person name="Lu L."/>
            <person name="Zhang H."/>
            <person name="Ding G."/>
            <person name="Wang Z."/>
            <person name="Chen Z."/>
            <person name="Shi T."/>
            <person name="Li J."/>
            <person name="Yu J."/>
            <person name="Wong J."/>
        </authorList>
    </citation>
    <scope>CROTONYLATION AT LYS-5; LYS-10 AND LYS-24</scope>
</reference>
<reference key="48">
    <citation type="journal article" date="2017" name="Mol. Cell">
        <title>Serine ADP-ribosylation depends on HPF1.</title>
        <authorList>
            <person name="Bonfiglio J.J."/>
            <person name="Fontana P."/>
            <person name="Zhang Q."/>
            <person name="Colby T."/>
            <person name="Gibbs-Seymour I."/>
            <person name="Atanassov I."/>
            <person name="Bartlett E."/>
            <person name="Zaja R."/>
            <person name="Ahel I."/>
            <person name="Matic I."/>
        </authorList>
    </citation>
    <scope>ADP-RIBOSYLATION AT SER-11 AND SER-29</scope>
</reference>
<reference key="49">
    <citation type="journal article" date="2017" name="Nature">
        <title>KAT2A coupled with the alpha-KGDH complex acts as a histone H3 succinyltransferase.</title>
        <authorList>
            <person name="Wang Y."/>
            <person name="Guo Y.R."/>
            <person name="Liu K."/>
            <person name="Yin Z."/>
            <person name="Liu R."/>
            <person name="Xia Y."/>
            <person name="Tan L."/>
            <person name="Yang P."/>
            <person name="Lee J.H."/>
            <person name="Li X.J."/>
            <person name="Hawke D."/>
            <person name="Zheng Y."/>
            <person name="Qian X."/>
            <person name="Lyu J."/>
            <person name="He J."/>
            <person name="Xing D."/>
            <person name="Tao Y.J."/>
            <person name="Lu Z."/>
        </authorList>
    </citation>
    <scope>SUCCINYLATION AT LYS-80</scope>
</reference>
<reference key="50">
    <citation type="journal article" date="2018" name="Cell Rep.">
        <title>Interplay of histone marks with serine ADP-ribosylation.</title>
        <authorList>
            <person name="Bartlett E."/>
            <person name="Bonfiglio J.J."/>
            <person name="Prokhorova E."/>
            <person name="Colby T."/>
            <person name="Zobel F."/>
            <person name="Ahel I."/>
            <person name="Matic I."/>
        </authorList>
    </citation>
    <scope>ADP-RIBOSYLATION AT SER-11</scope>
</reference>
<reference key="51">
    <citation type="journal article" date="2018" name="Elife">
        <title>Serine is the major residue for ADP-ribosylation upon DNA damage.</title>
        <authorList>
            <person name="Palazzo L."/>
            <person name="Leidecker O."/>
            <person name="Prokhorova E."/>
            <person name="Dauben H."/>
            <person name="Matic I."/>
            <person name="Ahel I."/>
        </authorList>
    </citation>
    <scope>ADP-RIBOSYLATION AT SER-11 AND SER-29</scope>
</reference>
<reference key="52">
    <citation type="journal article" date="2019" name="Mol. Cell">
        <title>Glutarylation of histone H4 lysine 91 regulates chromatin dynamics.</title>
        <authorList>
            <person name="Bao X."/>
            <person name="Liu Z."/>
            <person name="Zhang W."/>
            <person name="Gladysz K."/>
            <person name="Fung Y.M.E."/>
            <person name="Tian G."/>
            <person name="Xiong Y."/>
            <person name="Wong J.W.H."/>
            <person name="Yuen K.W.Y."/>
            <person name="Li X.D."/>
        </authorList>
    </citation>
    <scope>GLUTARYLATION AT LYS-15; LYS-19; LYS-24; LYS-28; LYS-57; LYS-80; LYS-116 AND LYS-123</scope>
</reference>
<reference key="53">
    <citation type="journal article" date="2019" name="Nature">
        <title>Histone serotonylation is a permissive modification that enhances TFIID binding to H3K4me3.</title>
        <authorList>
            <person name="Farrelly L.A."/>
            <person name="Thompson R.E."/>
            <person name="Zhao S."/>
            <person name="Lepack A.E."/>
            <person name="Lyu Y."/>
            <person name="Bhanu N.V."/>
            <person name="Zhang B."/>
            <person name="Loh Y.E."/>
            <person name="Ramakrishnan A."/>
            <person name="Vadodaria K.C."/>
            <person name="Heard K.J."/>
            <person name="Erikson G."/>
            <person name="Nakadai T."/>
            <person name="Bastle R.M."/>
            <person name="Lukasak B.J."/>
            <person name="Zebroski H. III"/>
            <person name="Alenina N."/>
            <person name="Bader M."/>
            <person name="Berton O."/>
            <person name="Roeder R.G."/>
            <person name="Molina H."/>
            <person name="Gage F.H."/>
            <person name="Shen L."/>
            <person name="Garcia B.A."/>
            <person name="Li H."/>
            <person name="Muir T.W."/>
            <person name="Maze I."/>
        </authorList>
    </citation>
    <scope>SEROTONYLATION AT GLN-6</scope>
</reference>
<reference key="54">
    <citation type="journal article" date="2019" name="Nature">
        <title>Metabolic regulation of gene expression by histone lactylation.</title>
        <authorList>
            <person name="Zhang D."/>
            <person name="Tang Z."/>
            <person name="Huang H."/>
            <person name="Zhou G."/>
            <person name="Cui C."/>
            <person name="Weng Y."/>
            <person name="Liu W."/>
            <person name="Kim S."/>
            <person name="Lee S."/>
            <person name="Perez-Neut M."/>
            <person name="Ding J."/>
            <person name="Czyz D."/>
            <person name="Hu R."/>
            <person name="Ye Z."/>
            <person name="He M."/>
            <person name="Zheng Y.G."/>
            <person name="Shuman H.A."/>
            <person name="Dai L."/>
            <person name="Ren B."/>
            <person name="Roeder R.G."/>
            <person name="Becker L."/>
            <person name="Zhao Y."/>
        </authorList>
    </citation>
    <scope>LACTYLATION AT LYS-9; LYS-19; LYS-24; LYS-28 AND LYS-80</scope>
</reference>
<reference key="55">
    <citation type="journal article" date="2019" name="Sci. Rep.">
        <title>VRK1 functional insufficiency due to alterations in protein stability or kinase activity of human VRK1 pathogenic variants implicated in neuromotor syndromes.</title>
        <authorList>
            <person name="Martin-Doncel E."/>
            <person name="Rojas A.M."/>
            <person name="Cantarero L."/>
            <person name="Lazo P.A."/>
        </authorList>
    </citation>
    <scope>PHOSPHORYLATION AT THR-4 BY VRK1</scope>
</reference>
<reference key="56">
    <citation type="journal article" date="2020" name="Science">
        <title>Dopaminylation of histone H3 in ventral tegmental area regulates cocaine seeking.</title>
        <authorList>
            <person name="Lepack A.E."/>
            <person name="Werner C.T."/>
            <person name="Stewart A.F."/>
            <person name="Fulton S.L."/>
            <person name="Zhong P."/>
            <person name="Farrelly L.A."/>
            <person name="Smith A.C.W."/>
            <person name="Ramakrishnan A."/>
            <person name="Lyu Y."/>
            <person name="Bastle R.M."/>
            <person name="Martin J.A."/>
            <person name="Mitra S."/>
            <person name="O'Connor R.M."/>
            <person name="Wang Z.J."/>
            <person name="Molina H."/>
            <person name="Turecki G."/>
            <person name="Shen L."/>
            <person name="Yan Z."/>
            <person name="Calipari E.S."/>
            <person name="Dietz D.M."/>
            <person name="Kenny P.J."/>
            <person name="Maze I."/>
        </authorList>
    </citation>
    <scope>DOPAMINYLATION AT GLN-6</scope>
</reference>
<reference key="57">
    <citation type="journal article" date="2021" name="Elife">
        <title>Serine ADP-ribosylation marks nucleosomes for ALC1-dependent chromatin remodeling.</title>
        <authorList>
            <person name="Mohapatra J."/>
            <person name="Tashiro K."/>
            <person name="Beckner R.L."/>
            <person name="Sierra J."/>
            <person name="Kilgore J.A."/>
            <person name="Williams N.S."/>
            <person name="Liszczak G."/>
        </authorList>
    </citation>
    <scope>ADP-RIBOSYLATION AT SER-11</scope>
</reference>
<reference key="58">
    <citation type="journal article" date="2021" name="Mol. Cell">
        <title>DNAJC9 integrates heat shock molecular chaperones into the histone chaperone network.</title>
        <authorList>
            <person name="Hammond C.M."/>
            <person name="Bao H."/>
            <person name="Hendriks I.A."/>
            <person name="Carraro M."/>
            <person name="Garcia-Nieto A."/>
            <person name="Liu Y."/>
            <person name="Reveron-Gomez N."/>
            <person name="Spanos C."/>
            <person name="Chen L."/>
            <person name="Rappsilber J."/>
            <person name="Nielsen M.L."/>
            <person name="Patel D.J."/>
            <person name="Huang H."/>
            <person name="Groth A."/>
        </authorList>
    </citation>
    <scope>INTERACTION WITH DNAJC9; CHAF1A AND CHAF1B</scope>
</reference>
<reference key="59">
    <citation type="journal article" date="2022" name="ACS Chem. Biol.">
        <title>Potent Activation of NAD+-Dependent Deacetylase Sirt7 by Nucleosome Binding.</title>
        <authorList>
            <person name="Kuznetsov V.I."/>
            <person name="Liu W.H."/>
            <person name="Klein M.A."/>
            <person name="Denu J.M."/>
        </authorList>
    </citation>
    <scope>ACETYLATION AT LYS-19</scope>
    <scope>ACYLATION AT LYS-19</scope>
</reference>
<reference evidence="64" key="60">
    <citation type="journal article" date="2007" name="Structure">
        <title>Structure of the histone chaperone ASF1 bound to the histone H3 C-terminal helix and functional insights.</title>
        <authorList>
            <person name="Agez M."/>
            <person name="Chen J."/>
            <person name="Guerois R."/>
            <person name="van Heijenoort C."/>
            <person name="Thuret J.-Y."/>
            <person name="Mann C."/>
            <person name="Ochsenbein F."/>
        </authorList>
    </citation>
    <scope>STRUCTURE BY NMR OF 121-136 IN COMPLEX WITH ASF1</scope>
</reference>
<reference evidence="68" key="61">
    <citation type="journal article" date="2020" name="Nature">
        <title>Structural mechanism of cGAS inhibition by the nucleosome.</title>
        <authorList>
            <person name="Pathare G.R."/>
            <person name="Decout A."/>
            <person name="Glueck S."/>
            <person name="Cavadini S."/>
            <person name="Makasheva K."/>
            <person name="Hovius R."/>
            <person name="Kempf G."/>
            <person name="Weiss J."/>
            <person name="Kozicka Z."/>
            <person name="Guey B."/>
            <person name="Melenec P."/>
            <person name="Fierz B."/>
            <person name="Thomae N.H."/>
            <person name="Ablasser A."/>
        </authorList>
    </citation>
    <scope>STRUCTURE BY ELECTRON MICROSCOPY (4.10 ANGSTROMS) OF 39-136 IN COMPLEX WITH NUCLEOSOME CORE AND CGAS</scope>
</reference>
<reference evidence="65 66 67" key="62">
    <citation type="journal article" date="2020" name="Nature">
        <title>The molecular basis of tight nuclear tethering and inactivation of cGAS.</title>
        <authorList>
            <person name="Zhao B."/>
            <person name="Xu P."/>
            <person name="Rowlett C.M."/>
            <person name="Jing T."/>
            <person name="Shinde O."/>
            <person name="Lei Y."/>
            <person name="West A.P."/>
            <person name="Liu W.R."/>
            <person name="Li P."/>
        </authorList>
    </citation>
    <scope>STRUCTURE BY ELECTRON MICROSCOPY (2.98 ANGSTROMS) OF 2-136 IN COMPLEX WITH NUCLEOSOME CORE AND CGAS</scope>
</reference>
<reference evidence="69 70" key="63">
    <citation type="journal article" date="2020" name="Science">
        <title>Structural basis of nucleosome-dependent cGAS inhibition.</title>
        <authorList>
            <person name="Boyer J.A."/>
            <person name="Spangler C.J."/>
            <person name="Strauss J.D."/>
            <person name="Cesmat A.P."/>
            <person name="Liu P."/>
            <person name="McGinty R.K."/>
            <person name="Zhang Q."/>
        </authorList>
    </citation>
    <scope>STRUCTURE BY ELECTRON MICROSCOPY (3.30 ANGSTROMS) IN COMPLEX WITH NUCLEOSOME CORE AND CGAS</scope>
</reference>
<reference evidence="71" key="64">
    <citation type="journal article" date="2022" name="Nucleic Acids Res.">
        <title>Multivalent DNA and nucleosome acidic patch interactions specify VRK1 mitotic localization and activity.</title>
        <authorList>
            <person name="Budziszewski G.R."/>
            <person name="Zhao Y."/>
            <person name="Spangler C.J."/>
            <person name="Kedziora K.M."/>
            <person name="Williams M.R."/>
            <person name="Azzam D.N."/>
            <person name="Skrajna A."/>
            <person name="Koyama Y."/>
            <person name="Cesmat A.P."/>
            <person name="Simmons H.C."/>
            <person name="Arteaga E.C."/>
            <person name="Strauss J.D."/>
            <person name="Kireev D."/>
            <person name="McGinty R.K."/>
        </authorList>
    </citation>
    <scope>STRUCTURE BY ELECTRON MICROSCOPY (3.00 ANGSTROMS) OF 2-136 IN COMPLEX WITH NUCLEOSOME CORE AND VRK1</scope>
</reference>
<proteinExistence type="evidence at protein level"/>
<protein>
    <recommendedName>
        <fullName>Histone H3.2</fullName>
    </recommendedName>
    <alternativeName>
        <fullName evidence="63">H3-clustered histone 13</fullName>
    </alternativeName>
    <alternativeName>
        <fullName evidence="61">H3-clustered histone 14</fullName>
    </alternativeName>
    <alternativeName>
        <fullName evidence="62">H3-clustered histone 15</fullName>
    </alternativeName>
    <alternativeName>
        <fullName>Histone H3/m</fullName>
    </alternativeName>
    <alternativeName>
        <fullName>Histone H3/o</fullName>
    </alternativeName>
</protein>
<sequence length="136" mass="15388">MARTKQTARKSTGGKAPRKQLATKAARKSAPATGGVKKPHRYRPGTVALREIRRYQKSTELLIRKLPFQRLVREIAQDFKTDLRFQSSAVMALQEASEAYLVGLFEDTNLCAIHAKRVTIMPKDIQLARRIRGERA</sequence>
<comment type="function">
    <text>Core component of nucleosome. Nucleosomes wrap and compact DNA into chromatin, limiting DNA accessibility to the cellular machineries which require DNA as a template. Histones thereby play a central role in transcription regulation, DNA repair, DNA replication and chromosomal stability. DNA accessibility is regulated via a complex set of post-translational modifications of histones, also called histone code, and nucleosome remodeling.</text>
</comment>
<comment type="subunit">
    <text evidence="24 35 55">The nucleosome is a histone octamer containing two molecules each of H2A, H2B, H3 and H4 assembled in one H3-H4 heterotetramer and two H2A-H2B heterodimers. The octamer wraps approximately 147 bp of DNA. During nucleosome assembly the chaperone ASF1A interacts with the histone H3-H4 heterodimer (via C-terminus of H3); this interaction is direct (PubMed:17292837). Interacts with DNAJC9, CHAF1A and CHAF1B (PubMed:33857403). Interacts with NASP; NASP is a histone chaperone that stabilizes and maintains a soluble pool of Histone H3-H4 dimers (PubMed:22195965).</text>
</comment>
<comment type="interaction">
    <interactant intactId="EBI-750650">
        <id>Q71DI3</id>
    </interactant>
    <interactant intactId="EBI-702390">
        <id>Q9UBB4</id>
        <label>ATXN10</label>
    </interactant>
    <organismsDiffer>false</organismsDiffer>
    <experiments>3</experiments>
</comment>
<comment type="interaction">
    <interactant intactId="EBI-750650">
        <id>Q71DI3</id>
    </interactant>
    <interactant intactId="EBI-4288838">
        <id>Q12830-4</id>
        <label>BPTF</label>
    </interactant>
    <organismsDiffer>false</organismsDiffer>
    <experiments>2</experiments>
</comment>
<comment type="interaction">
    <interactant intactId="EBI-750650">
        <id>Q71DI3</id>
    </interactant>
    <interactant intactId="EBI-1020839">
        <id>Q13111</id>
        <label>CHAF1A</label>
    </interactant>
    <organismsDiffer>false</organismsDiffer>
    <experiments>2</experiments>
</comment>
<comment type="interaction">
    <interactant intactId="EBI-750650">
        <id>Q71DI3</id>
    </interactant>
    <interactant intactId="EBI-287635">
        <id>Q9UER7-1</id>
        <label>DAXX</label>
    </interactant>
    <organismsDiffer>false</organismsDiffer>
    <experiments>5</experiments>
</comment>
<comment type="interaction">
    <interactant intactId="EBI-750650">
        <id>Q71DI3</id>
    </interactant>
    <interactant intactId="EBI-8589586">
        <id>P09172</id>
        <label>DBH</label>
    </interactant>
    <organismsDiffer>false</organismsDiffer>
    <experiments>3</experiments>
</comment>
<comment type="interaction">
    <interactant intactId="EBI-750650">
        <id>Q71DI3</id>
    </interactant>
    <interactant intactId="EBI-744302">
        <id>P14136</id>
        <label>GFAP</label>
    </interactant>
    <organismsDiffer>false</organismsDiffer>
    <experiments>3</experiments>
</comment>
<comment type="interaction">
    <interactant intactId="EBI-750650">
        <id>Q71DI3</id>
    </interactant>
    <interactant intactId="EBI-1056125">
        <id>Q16778</id>
        <label>H2BC21</label>
    </interactant>
    <organismsDiffer>false</organismsDiffer>
    <experiments>2</experiments>
</comment>
<comment type="interaction">
    <interactant intactId="EBI-750650">
        <id>Q71DI3</id>
    </interactant>
    <interactant intactId="EBI-358900">
        <id>Q16695</id>
        <label>H3-4</label>
    </interactant>
    <organismsDiffer>false</organismsDiffer>
    <experiments>2</experiments>
</comment>
<comment type="interaction">
    <interactant intactId="EBI-750650">
        <id>Q71DI3</id>
    </interactant>
    <interactant intactId="EBI-302023">
        <id>P62805</id>
        <label>H4C9</label>
    </interactant>
    <organismsDiffer>false</organismsDiffer>
    <experiments>4</experiments>
</comment>
<comment type="interaction">
    <interactant intactId="EBI-750650">
        <id>Q71DI3</id>
    </interactant>
    <interactant intactId="EBI-466029">
        <id>P42858</id>
        <label>HTT</label>
    </interactant>
    <organismsDiffer>false</organismsDiffer>
    <experiments>18</experiments>
</comment>
<comment type="interaction">
    <interactant intactId="EBI-750650">
        <id>Q71DI3</id>
    </interactant>
    <interactant intactId="EBI-1055254">
        <id>Q8WXH2</id>
        <label>JPH3</label>
    </interactant>
    <organismsDiffer>false</organismsDiffer>
    <experiments>3</experiments>
</comment>
<comment type="interaction">
    <interactant intactId="EBI-750650">
        <id>Q71DI3</id>
    </interactant>
    <interactant intactId="EBI-351935">
        <id>P02545</id>
        <label>LMNA</label>
    </interactant>
    <organismsDiffer>false</organismsDiffer>
    <experiments>6</experiments>
</comment>
<comment type="interaction">
    <interactant intactId="EBI-750650">
        <id>Q71DI3</id>
    </interactant>
    <interactant intactId="EBI-9034379">
        <id>P02545-6</id>
        <label>LMNA</label>
    </interactant>
    <organismsDiffer>false</organismsDiffer>
    <experiments>3</experiments>
</comment>
<comment type="interaction">
    <interactant intactId="EBI-750650">
        <id>Q71DI3</id>
    </interactant>
    <interactant intactId="EBI-7038920">
        <id>P49321-2</id>
        <label>NASP</label>
    </interactant>
    <organismsDiffer>false</organismsDiffer>
    <experiments>4</experiments>
</comment>
<comment type="interaction">
    <interactant intactId="EBI-750650">
        <id>Q71DI3</id>
    </interactant>
    <interactant intactId="EBI-713665">
        <id>P19404</id>
        <label>NDUFV2</label>
    </interactant>
    <organismsDiffer>false</organismsDiffer>
    <experiments>3</experiments>
</comment>
<comment type="interaction">
    <interactant intactId="EBI-750650">
        <id>Q71DI3</id>
    </interactant>
    <interactant intactId="EBI-1391623">
        <id>P29474</id>
        <label>NOS3</label>
    </interactant>
    <organismsDiffer>false</organismsDiffer>
    <experiments>3</experiments>
</comment>
<comment type="interaction">
    <interactant intactId="EBI-750650">
        <id>Q71DI3</id>
    </interactant>
    <interactant intactId="EBI-748974">
        <id>Q96CV9</id>
        <label>OPTN</label>
    </interactant>
    <organismsDiffer>false</organismsDiffer>
    <experiments>3</experiments>
</comment>
<comment type="interaction">
    <interactant intactId="EBI-750650">
        <id>Q71DI3</id>
    </interactant>
    <interactant intactId="EBI-985879">
        <id>P37840</id>
        <label>SNCA</label>
    </interactant>
    <organismsDiffer>false</organismsDiffer>
    <experiments>3</experiments>
</comment>
<comment type="subcellular location">
    <subcellularLocation>
        <location>Nucleus</location>
    </subcellularLocation>
    <subcellularLocation>
        <location>Chromosome</location>
    </subcellularLocation>
</comment>
<comment type="developmental stage">
    <text>Expressed during S phase, then expression strongly decreases as cell division slows down during the process of differentiation.</text>
</comment>
<comment type="PTM">
    <text evidence="8 11 12 16 17 18 20 23 29 39">Acetylation is generally linked to gene activation. Acetylation on Lys-10 (H3K9ac) impairs methylation at Arg-9 (H3R8me2s). Acetylation on Lys-19 (H3K18ac) and Lys-24 (H3K24ac) favors methylation at Arg-18 (H3R17me). Acetylation at Lys-123 (H3K122ac) by EP300/p300 plays a central role in chromatin structure: localizes at the surface of the histone octamer and stimulates transcription, possibly by promoting nucleosome instability.</text>
</comment>
<comment type="PTM">
    <text evidence="11 12 18 19">Citrullination at Arg-9 (H3R8ci) and/or Arg-18 (H3R17ci) by PADI4 impairs methylation and represses transcription.</text>
</comment>
<comment type="PTM">
    <text evidence="11 12 17 18 23 25 27 28">Asymmetric dimethylation at Arg-18 (H3R17me2a) by CARM1 is linked to gene activation. Symmetric dimethylation at Arg-9 (H3R8me2s) by PRMT5 is linked to gene repression. Asymmetric dimethylation at Arg-3 (H3R2me2a) by PRMT6 is linked to gene repression and is mutually exclusive with H3 Lys-5 methylation (H3K4me2 and H3K4me3). H3R2me2a is present at the 3' of genes regardless of their transcription state and is enriched on inactive promoters, while it is absent on active promoters.</text>
</comment>
<comment type="PTM">
    <text evidence="7 8 9 10 13 14 16 17 18 20 22 23 36">Methylation at Lys-5 (H3K4me), Lys-37 (H3K36me) and Lys-80 (H3K79me) are linked to gene activation. Methylation at Lys-5 (H3K4me) facilitates subsequent acetylation of H3 and H4. Methylation at Lys-80 (H3K79me) is associated with DNA double-strand break (DSB) responses and is a specific target for TP53BP1. Methylation at Lys-10 (H3K9me) and Lys-28 (H3K27me) are linked to gene repression. Methylation at Lys-10 (H3K9me) is a specific target for HP1 proteins (CBX1, CBX3 and CBX5) and prevents subsequent phosphorylation at Ser-11 (H3S10ph) and acetylation of H3 and H4. Methylation at Lys-5 (H3K4me) and Lys-80 (H3K79me) require preliminary monoubiquitination of H2B at 'Lys-120'. Methylation at Lys-10 (H3K9me) and Lys-28 (H3K27me) are enriched in inactive X chromosome chromatin. Monomethylation at Lys-57 (H3K56me1) by EHMT2/G9A in G1 phase promotes interaction with PCNA and is required for DNA replication.</text>
</comment>
<comment type="PTM">
    <text evidence="7 8 9 10 14 15 16 17 18 20 23 26 30 31 38 51">Phosphorylated at Thr-4 (H3T3ph) by VRK1 (PubMed:31527692). Phosphorylated at Thr-4 (H3T3ph) by HASPIN during prophase and dephosphorylated during anaphase (PubMed:15681610, PubMed:16185088). Phosphorylation at Ser-11 (H3S10ph) by AURKB is crucial for chromosome condensation and cell-cycle progression during mitosis and meiosis. In addition phosphorylation at Ser-11 (H3S10ph) by RPS6KA4 and RPS6KA5 is important during interphase because it enables the transcription of genes following external stimulation, like mitogens, stress, growth factors or UV irradiation and result in the activation of genes, such as c-fos and c-jun. Phosphorylation at Ser-11 (H3S10ph), which is linked to gene activation, prevents methylation at Lys-10 (H3K9me) but facilitates acetylation of H3 and H4. Phosphorylation at Ser-11 (H3S10ph) by AURKB mediates the dissociation of HP1 proteins (CBX1, CBX3 and CBX5) from heterochromatin. Phosphorylation at Ser-11 (H3S10ph) is also an essential regulatory mechanism for neoplastic cell transformation. Phosphorylated at Ser-29 (H3S28ph) by MAP3K20 isoform 1, RPS6KA5 or AURKB during mitosis or upon ultraviolet B irradiation. Phosphorylation at Thr-7 (H3T6ph) by PRKCB is a specific tag for epigenetic transcriptional activation that prevents demethylation of Lys-5 (H3K4me) by LSD1/KDM1A. At centromeres, specifically phosphorylated at Thr-12 (H3T11ph) from prophase to early anaphase, by DAPK3 and PKN1. Phosphorylation at Thr-12 (H3T11ph) by PKN1 or isoform M2 of PKM (PKM2) is a specific tag for epigenetic transcriptional activation that promotes demethylation of Lys-10 (H3K9me) by KDM4C/JMJD2C. Phosphorylation at Tyr-42 (H3Y41ph) by JAK2 promotes exclusion of CBX5 (HP1 alpha) from chromatin.</text>
</comment>
<comment type="PTM">
    <text evidence="21">Monoubiquitinated by RAG1 in lymphoid cells, monoubiquitination is required for V(D)J recombination. Ubiquitinated by the CUL4-DDB-RBX1 complex in response to ultraviolet irradiation. This may weaken the interaction between histones and DNA and facilitate DNA accessibility to repair proteins.</text>
</comment>
<comment type="PTM">
    <text evidence="44">Lysine deamination at Lys-5 (H3K4all) to form allysine is mediated by LOXL2. Allysine formation by LOXL2 only takes place on H3K4me3 and results in gene repression.</text>
</comment>
<comment type="PTM">
    <text evidence="34">Crotonylation (Kcr) is specifically present in male germ cells and marks testis-specific genes in post-meiotic cells, including X-linked genes that escape sex chromosome inactivation in haploid cells. Crotonylation marks active promoters and enhancers and confers resistance to transcriptional repressors. It is also associated with post-meiotically activated genes on autosomes.</text>
</comment>
<comment type="PTM">
    <text evidence="2">Butyrylation of histones marks active promoters and competes with histone acetylation. It is present during late spermatogenesis.</text>
</comment>
<comment type="PTM">
    <text evidence="43 47">Succinylation at Lys-80 (H3K79succ) by KAT2A takes place with a maximum frequency around the transcription start sites of genes (PubMed:29211711). It gives a specific tag for epigenetic transcription activation (PubMed:29211711). Desuccinylation at Lys-123 (H3K122succ) by SIRT7 in response to DNA damage promotes chromatin condensation and double-strand breaks (DSBs) repair (PubMed:27436229).</text>
</comment>
<comment type="PTM">
    <text evidence="48 49 56">Serine ADP-ribosylation by PARP1 or PARP2 constitutes the primary form of ADP-ribosylation of proteins in response to DNA damage (PubMed:29480802, PubMed:34874266). Serine ADP-ribosylation at Ser-11 (H3S10ADPr) promotes recruitment of CHD1L (PubMed:34874266). H3S10ADPr is mutually exclusive with phosphorylation at Ser-11 (H3S10ph) and impairs acetylation at Lys-10 (H3K9ac) (PubMed:30257210).</text>
</comment>
<comment type="PTM">
    <text evidence="50">Serotonylated by TGM2 at Gln-6 (H3Q5ser) during serotonergic neuron differentiation (PubMed:30867594). H3Q5ser is associated with trimethylation of Lys-5 (H3K4me3) and enhances general transcription factor IID (TFIID) complex-binding to H3K4me3, thereby facilitating transcription (PubMed:30867594).</text>
</comment>
<comment type="PTM">
    <text evidence="5 54">Dopaminylated by TGM2 at Gln-6 (H3Q5dop) in ventral tegmental area (VTA) neurons (PubMed:32273471). H3Q5dop mediates neurotransmission-independent role of nuclear dopamine by regulating relapse-related transcriptional plasticity in the reward system (By similarity).</text>
</comment>
<comment type="PTM">
    <text evidence="53">Lactylated in macrophages by EP300/P300 by using lactoyl-CoA directly derived from endogenous or exogenous lactate, leading to stimulates gene transcription.</text>
</comment>
<comment type="similarity">
    <text evidence="58">Belongs to the histone H3 family.</text>
</comment>
<comment type="caution">
    <text evidence="44 59 60">The original paper reporting lysine deamination at Lys-5 by LOXL2 has been retracted due to inappropriate manipulation of figure data (PubMed:22483618, PubMed:27392148). However, this modification was confirmed in a subsequent publication (PubMed:27735137).</text>
</comment>
<name>H32_HUMAN</name>
<accession>Q71DI3</accession>
<accession>A2BDF6</accession>
<accession>A6NFS4</accession>
<accession>Q6B053</accession>
<dbReference type="EMBL" id="AF531305">
    <property type="status" value="NOT_ANNOTATED_CDS"/>
    <property type="molecule type" value="Genomic_DNA"/>
</dbReference>
<dbReference type="EMBL" id="AF531307">
    <property type="protein sequence ID" value="AAN39283.1"/>
    <property type="molecule type" value="Genomic_DNA"/>
</dbReference>
<dbReference type="EMBL" id="AY648851">
    <property type="protein sequence ID" value="AAT68254.1"/>
    <property type="molecule type" value="Genomic_DNA"/>
</dbReference>
<dbReference type="EMBL" id="AL591493">
    <property type="protein sequence ID" value="CAI12559.1"/>
    <property type="molecule type" value="Genomic_DNA"/>
</dbReference>
<dbReference type="EMBL" id="AL591493">
    <property type="protein sequence ID" value="CAI12561.1"/>
    <property type="molecule type" value="Genomic_DNA"/>
</dbReference>
<dbReference type="EMBL" id="AL591493">
    <property type="protein sequence ID" value="CAI12566.1"/>
    <property type="molecule type" value="Genomic_DNA"/>
</dbReference>
<dbReference type="EMBL" id="BC074969">
    <property type="protein sequence ID" value="AAH74969.2"/>
    <property type="molecule type" value="mRNA"/>
</dbReference>
<dbReference type="EMBL" id="BC130635">
    <property type="protein sequence ID" value="AAI30636.1"/>
    <property type="molecule type" value="mRNA"/>
</dbReference>
<dbReference type="EMBL" id="BC130637">
    <property type="protein sequence ID" value="AAI30638.1"/>
    <property type="molecule type" value="mRNA"/>
</dbReference>
<dbReference type="CCDS" id="CCDS30848.1"/>
<dbReference type="CCDS" id="CCDS30850.1"/>
<dbReference type="CCDS" id="CCDS41388.1"/>
<dbReference type="RefSeq" id="NP_001005464.1">
    <property type="nucleotide sequence ID" value="NM_001005464.3"/>
</dbReference>
<dbReference type="RefSeq" id="NP_001116847.1">
    <property type="nucleotide sequence ID" value="NM_001123375.2"/>
</dbReference>
<dbReference type="RefSeq" id="NP_066403.2">
    <property type="nucleotide sequence ID" value="NM_021059.2"/>
</dbReference>
<dbReference type="PDB" id="2IIJ">
    <property type="method" value="NMR"/>
    <property type="chains" value="B=121-136"/>
</dbReference>
<dbReference type="PDB" id="2X4W">
    <property type="method" value="X-ray"/>
    <property type="resolution" value="1.50 A"/>
    <property type="chains" value="B=23-43"/>
</dbReference>
<dbReference type="PDB" id="2X4X">
    <property type="method" value="X-ray"/>
    <property type="resolution" value="1.85 A"/>
    <property type="chains" value="B/D/F/H=23-43"/>
</dbReference>
<dbReference type="PDB" id="2X4Y">
    <property type="method" value="X-ray"/>
    <property type="resolution" value="1.70 A"/>
    <property type="chains" value="B/D/F/H/J/L/N/P=23-43"/>
</dbReference>
<dbReference type="PDB" id="3AV1">
    <property type="method" value="X-ray"/>
    <property type="resolution" value="2.50 A"/>
    <property type="chains" value="A/E=1-136"/>
</dbReference>
<dbReference type="PDB" id="3DB3">
    <property type="method" value="X-ray"/>
    <property type="resolution" value="2.40 A"/>
    <property type="chains" value="B=7-12"/>
</dbReference>
<dbReference type="PDB" id="3MO8">
    <property type="method" value="X-ray"/>
    <property type="resolution" value="1.69 A"/>
    <property type="chains" value="B=31-42"/>
</dbReference>
<dbReference type="PDB" id="3QO2">
    <property type="method" value="X-ray"/>
    <property type="resolution" value="2.49 A"/>
    <property type="chains" value="P/Q/R/S=2-16"/>
</dbReference>
<dbReference type="PDB" id="3R93">
    <property type="method" value="X-ray"/>
    <property type="resolution" value="2.06 A"/>
    <property type="chains" value="E/F/G/H=2-16"/>
</dbReference>
<dbReference type="PDB" id="4MZF">
    <property type="method" value="X-ray"/>
    <property type="resolution" value="2.10 A"/>
    <property type="chains" value="A=2-8"/>
</dbReference>
<dbReference type="PDB" id="4MZG">
    <property type="method" value="X-ray"/>
    <property type="resolution" value="1.70 A"/>
    <property type="chains" value="A/C=2-21"/>
</dbReference>
<dbReference type="PDB" id="4MZH">
    <property type="method" value="X-ray"/>
    <property type="resolution" value="2.20 A"/>
    <property type="chains" value="B=2-10"/>
</dbReference>
<dbReference type="PDB" id="4OUC">
    <property type="method" value="X-ray"/>
    <property type="resolution" value="1.90 A"/>
    <property type="chains" value="B=2-12"/>
</dbReference>
<dbReference type="PDB" id="5B0Y">
    <property type="method" value="X-ray"/>
    <property type="resolution" value="2.56 A"/>
    <property type="chains" value="A/E=1-136"/>
</dbReference>
<dbReference type="PDB" id="5B0Z">
    <property type="method" value="X-ray"/>
    <property type="resolution" value="1.99 A"/>
    <property type="chains" value="A/E=1-136"/>
</dbReference>
<dbReference type="PDB" id="5B40">
    <property type="method" value="X-ray"/>
    <property type="resolution" value="3.33 A"/>
    <property type="chains" value="A/E=1-136"/>
</dbReference>
<dbReference type="PDB" id="5BO0">
    <property type="method" value="X-ray"/>
    <property type="resolution" value="2.91 A"/>
    <property type="chains" value="A=57-136"/>
</dbReference>
<dbReference type="PDB" id="5CIU">
    <property type="method" value="X-ray"/>
    <property type="resolution" value="2.24 A"/>
    <property type="chains" value="C/D=29-43"/>
</dbReference>
<dbReference type="PDB" id="5VAC">
    <property type="method" value="X-ray"/>
    <property type="resolution" value="1.95 A"/>
    <property type="chains" value="C=19-37"/>
</dbReference>
<dbReference type="PDB" id="6ACE">
    <property type="method" value="X-ray"/>
    <property type="resolution" value="1.98 A"/>
    <property type="chains" value="B=119-126"/>
</dbReference>
<dbReference type="PDB" id="6FML">
    <property type="method" value="EM"/>
    <property type="resolution" value="4.34 A"/>
    <property type="chains" value="M/Q=2-136"/>
</dbReference>
<dbReference type="PDB" id="6T79">
    <property type="method" value="EM"/>
    <property type="resolution" value="3.20 A"/>
    <property type="chains" value="A/E=1-136"/>
</dbReference>
<dbReference type="PDB" id="6T7A">
    <property type="method" value="EM"/>
    <property type="resolution" value="3.70 A"/>
    <property type="chains" value="A/E=1-136"/>
</dbReference>
<dbReference type="PDB" id="6T7B">
    <property type="method" value="EM"/>
    <property type="resolution" value="5.10 A"/>
    <property type="chains" value="A/E=1-136"/>
</dbReference>
<dbReference type="PDB" id="6T7C">
    <property type="method" value="EM"/>
    <property type="resolution" value="4.00 A"/>
    <property type="chains" value="A/E=1-136"/>
</dbReference>
<dbReference type="PDB" id="6T7D">
    <property type="method" value="EM"/>
    <property type="resolution" value="4.40 A"/>
    <property type="chains" value="A/E=1-136"/>
</dbReference>
<dbReference type="PDB" id="6X59">
    <property type="method" value="EM"/>
    <property type="resolution" value="2.98 A"/>
    <property type="chains" value="A/E=2-136"/>
</dbReference>
<dbReference type="PDB" id="6X5A">
    <property type="method" value="EM"/>
    <property type="resolution" value="4.36 A"/>
    <property type="chains" value="A/E=2-136"/>
</dbReference>
<dbReference type="PDB" id="6XJD">
    <property type="method" value="EM"/>
    <property type="resolution" value="6.80 A"/>
    <property type="chains" value="A/E=2-136"/>
</dbReference>
<dbReference type="PDB" id="6Y5D">
    <property type="method" value="EM"/>
    <property type="resolution" value="4.10 A"/>
    <property type="chains" value="A/E/M/Q=39-136"/>
</dbReference>
<dbReference type="PDB" id="6Y5E">
    <property type="method" value="EM"/>
    <property type="resolution" value="3.15 A"/>
    <property type="chains" value="A/E=39-134"/>
</dbReference>
<dbReference type="PDB" id="7BQZ">
    <property type="method" value="X-ray"/>
    <property type="resolution" value="3.10 A"/>
    <property type="chains" value="B/D/F/H=2-16"/>
</dbReference>
<dbReference type="PDB" id="7BU9">
    <property type="method" value="X-ray"/>
    <property type="resolution" value="3.50 A"/>
    <property type="chains" value="B/D/F/H=2-16"/>
</dbReference>
<dbReference type="PDB" id="7JO9">
    <property type="method" value="EM"/>
    <property type="resolution" value="3.30 A"/>
    <property type="chains" value="A/E=1-136"/>
</dbReference>
<dbReference type="PDB" id="7JOA">
    <property type="method" value="EM"/>
    <property type="resolution" value="3.30 A"/>
    <property type="chains" value="A/E=1-136"/>
</dbReference>
<dbReference type="PDB" id="7JZV">
    <property type="method" value="EM"/>
    <property type="resolution" value="3.90 A"/>
    <property type="chains" value="P/p=2-136"/>
</dbReference>
<dbReference type="PDB" id="7PET">
    <property type="method" value="EM"/>
    <property type="resolution" value="9.50 A"/>
    <property type="chains" value="A/E/K/O/a/e/k/o=1-136"/>
</dbReference>
<dbReference type="PDB" id="7PEU">
    <property type="method" value="EM"/>
    <property type="resolution" value="7.20 A"/>
    <property type="chains" value="A/E/K/O/a/e=1-136"/>
</dbReference>
<dbReference type="PDB" id="7PEV">
    <property type="method" value="EM"/>
    <property type="resolution" value="6.00 A"/>
    <property type="chains" value="A/E/K/O=1-136"/>
</dbReference>
<dbReference type="PDB" id="7PEW">
    <property type="method" value="EM"/>
    <property type="resolution" value="4.60 A"/>
    <property type="chains" value="A/E=1-136"/>
</dbReference>
<dbReference type="PDB" id="7PEX">
    <property type="method" value="EM"/>
    <property type="resolution" value="5.10 A"/>
    <property type="chains" value="a/e=1-136"/>
</dbReference>
<dbReference type="PDB" id="7PEY">
    <property type="method" value="EM"/>
    <property type="resolution" value="4.50 A"/>
    <property type="chains" value="K/O=1-136"/>
</dbReference>
<dbReference type="PDB" id="7PEZ">
    <property type="method" value="EM"/>
    <property type="resolution" value="7.90 A"/>
    <property type="chains" value="k/o=1-136"/>
</dbReference>
<dbReference type="PDB" id="7PF0">
    <property type="method" value="EM"/>
    <property type="resolution" value="11.00 A"/>
    <property type="chains" value="A/E/K/O/a/e=1-136"/>
</dbReference>
<dbReference type="PDB" id="7PF2">
    <property type="method" value="EM"/>
    <property type="resolution" value="5.10 A"/>
    <property type="chains" value="A/E/K/O=1-136"/>
</dbReference>
<dbReference type="PDB" id="7PF3">
    <property type="method" value="EM"/>
    <property type="resolution" value="4.00 A"/>
    <property type="chains" value="k/o=1-136"/>
</dbReference>
<dbReference type="PDB" id="7PF4">
    <property type="method" value="EM"/>
    <property type="resolution" value="4.00 A"/>
    <property type="chains" value="K/O=1-136"/>
</dbReference>
<dbReference type="PDB" id="7PF5">
    <property type="method" value="EM"/>
    <property type="resolution" value="3.80 A"/>
    <property type="chains" value="a/e=1-136"/>
</dbReference>
<dbReference type="PDB" id="7PF6">
    <property type="method" value="EM"/>
    <property type="resolution" value="4.00 A"/>
    <property type="chains" value="A/E=1-136"/>
</dbReference>
<dbReference type="PDB" id="7PFA">
    <property type="method" value="EM"/>
    <property type="resolution" value="9.70 A"/>
    <property type="chains" value="A/E/K/O/a/e=1-136"/>
</dbReference>
<dbReference type="PDB" id="7PFC">
    <property type="method" value="EM"/>
    <property type="resolution" value="6.40 A"/>
    <property type="chains" value="A/E/K/O=1-136"/>
</dbReference>
<dbReference type="PDB" id="7PFD">
    <property type="method" value="EM"/>
    <property type="resolution" value="4.40 A"/>
    <property type="chains" value="A/E=1-136"/>
</dbReference>
<dbReference type="PDB" id="7PFE">
    <property type="method" value="EM"/>
    <property type="resolution" value="4.40 A"/>
    <property type="chains" value="a/e=1-136"/>
</dbReference>
<dbReference type="PDB" id="7PFF">
    <property type="method" value="EM"/>
    <property type="resolution" value="4.30 A"/>
    <property type="chains" value="K/O=1-136"/>
</dbReference>
<dbReference type="PDB" id="7PFT">
    <property type="method" value="EM"/>
    <property type="resolution" value="9.80 A"/>
    <property type="chains" value="A/E/K/O/a/e=1-136"/>
</dbReference>
<dbReference type="PDB" id="7PFU">
    <property type="method" value="EM"/>
    <property type="resolution" value="5.00 A"/>
    <property type="chains" value="A/E/K/O=1-136"/>
</dbReference>
<dbReference type="PDB" id="7PFV">
    <property type="method" value="EM"/>
    <property type="resolution" value="4.40 A"/>
    <property type="chains" value="A/E=1-136"/>
</dbReference>
<dbReference type="PDB" id="7PFW">
    <property type="method" value="EM"/>
    <property type="resolution" value="5.20 A"/>
    <property type="chains" value="a/e=1-136"/>
</dbReference>
<dbReference type="PDB" id="7PFX">
    <property type="method" value="EM"/>
    <property type="resolution" value="4.30 A"/>
    <property type="chains" value="K/O=1-136"/>
</dbReference>
<dbReference type="PDB" id="7TAN">
    <property type="method" value="EM"/>
    <property type="resolution" value="3.00 A"/>
    <property type="chains" value="A/E=2-136"/>
</dbReference>
<dbReference type="PDB" id="7U50">
    <property type="method" value="EM"/>
    <property type="resolution" value="3.40 A"/>
    <property type="chains" value="A/E=2-136"/>
</dbReference>
<dbReference type="PDB" id="7U51">
    <property type="method" value="EM"/>
    <property type="resolution" value="3.10 A"/>
    <property type="chains" value="A/E=2-136"/>
</dbReference>
<dbReference type="PDB" id="7U52">
    <property type="method" value="EM"/>
    <property type="resolution" value="3.40 A"/>
    <property type="chains" value="A/E=2-136"/>
</dbReference>
<dbReference type="PDB" id="7U53">
    <property type="method" value="EM"/>
    <property type="resolution" value="4.00 A"/>
    <property type="chains" value="A/E=2-136"/>
</dbReference>
<dbReference type="PDB" id="7UV9">
    <property type="method" value="EM"/>
    <property type="resolution" value="3.20 A"/>
    <property type="chains" value="A/E=2-136"/>
</dbReference>
<dbReference type="PDB" id="7UVA">
    <property type="method" value="X-ray"/>
    <property type="resolution" value="1.98 A"/>
    <property type="chains" value="C/F=30-42"/>
</dbReference>
<dbReference type="PDB" id="7XCR">
    <property type="method" value="EM"/>
    <property type="resolution" value="2.57 A"/>
    <property type="chains" value="A/E=38-136"/>
</dbReference>
<dbReference type="PDB" id="7XCT">
    <property type="method" value="EM"/>
    <property type="resolution" value="2.72 A"/>
    <property type="chains" value="A/E=38-136"/>
</dbReference>
<dbReference type="PDB" id="7XD0">
    <property type="method" value="EM"/>
    <property type="resolution" value="3.48 A"/>
    <property type="chains" value="A/E=38-136"/>
</dbReference>
<dbReference type="PDB" id="7YRD">
    <property type="method" value="EM"/>
    <property type="resolution" value="3.20 A"/>
    <property type="chains" value="A/E=34-136"/>
</dbReference>
<dbReference type="PDB" id="8AAG">
    <property type="method" value="EM"/>
    <property type="resolution" value="10.00 A"/>
    <property type="chains" value="A/E=1-136"/>
</dbReference>
<dbReference type="PDB" id="8ATF">
    <property type="method" value="EM"/>
    <property type="resolution" value="3.45 A"/>
    <property type="chains" value="M/Q=2-136"/>
</dbReference>
<dbReference type="PDB" id="8AV6">
    <property type="method" value="EM"/>
    <property type="resolution" value="4.68 A"/>
    <property type="chains" value="M/Q=2-136"/>
</dbReference>
<dbReference type="PDB" id="8GRQ">
    <property type="method" value="EM"/>
    <property type="resolution" value="3.87 A"/>
    <property type="chains" value="A/E=38-135"/>
</dbReference>
<dbReference type="PDB" id="8HQY">
    <property type="method" value="EM"/>
    <property type="resolution" value="3.05 A"/>
    <property type="chains" value="A/E=39-135"/>
</dbReference>
<dbReference type="PDB" id="8HR1">
    <property type="method" value="EM"/>
    <property type="resolution" value="3.02 A"/>
    <property type="chains" value="A/E=39-135"/>
</dbReference>
<dbReference type="PDB" id="8JLB">
    <property type="method" value="EM"/>
    <property type="resolution" value="2.36 A"/>
    <property type="chains" value="A/E=2-136"/>
</dbReference>
<dbReference type="PDB" id="8JLD">
    <property type="method" value="EM"/>
    <property type="resolution" value="2.48 A"/>
    <property type="chains" value="A/E=2-136"/>
</dbReference>
<dbReference type="PDB" id="8OL1">
    <property type="method" value="EM"/>
    <property type="resolution" value="3.50 A"/>
    <property type="chains" value="A/E=38-135"/>
</dbReference>
<dbReference type="PDB" id="8VMJ">
    <property type="method" value="EM"/>
    <property type="resolution" value="3.10 A"/>
    <property type="chains" value="I/O=1-136"/>
</dbReference>
<dbReference type="PDB" id="8VMN">
    <property type="method" value="EM"/>
    <property type="resolution" value="3.50 A"/>
    <property type="chains" value="I/O=1-136"/>
</dbReference>
<dbReference type="PDB" id="8VO0">
    <property type="method" value="EM"/>
    <property type="resolution" value="3.30 A"/>
    <property type="chains" value="I/O=42-136"/>
</dbReference>
<dbReference type="PDB" id="8VOB">
    <property type="method" value="EM"/>
    <property type="resolution" value="3.10 A"/>
    <property type="chains" value="I/O=1-136"/>
</dbReference>
<dbReference type="PDB" id="8VWS">
    <property type="method" value="EM"/>
    <property type="resolution" value="3.10 A"/>
    <property type="chains" value="A/E=2-136"/>
</dbReference>
<dbReference type="PDB" id="8VWT">
    <property type="method" value="EM"/>
    <property type="resolution" value="3.30 A"/>
    <property type="chains" value="A/E=2-136"/>
</dbReference>
<dbReference type="PDB" id="8VWU">
    <property type="method" value="EM"/>
    <property type="resolution" value="3.00 A"/>
    <property type="chains" value="A/E=2-136"/>
</dbReference>
<dbReference type="PDB" id="8VWV">
    <property type="method" value="EM"/>
    <property type="resolution" value="3.60 A"/>
    <property type="chains" value="A/E=2-136"/>
</dbReference>
<dbReference type="PDB" id="8X7I">
    <property type="method" value="EM"/>
    <property type="resolution" value="3.27 A"/>
    <property type="chains" value="A/E=38-135"/>
</dbReference>
<dbReference type="PDB" id="8X7J">
    <property type="method" value="EM"/>
    <property type="resolution" value="3.39 A"/>
    <property type="chains" value="A/E=39-135"/>
</dbReference>
<dbReference type="PDB" id="8X7K">
    <property type="method" value="EM"/>
    <property type="resolution" value="3.27 A"/>
    <property type="chains" value="A/E=39-135"/>
</dbReference>
<dbReference type="PDB" id="9DWF">
    <property type="method" value="EM"/>
    <property type="resolution" value="3.10 A"/>
    <property type="chains" value="A/E=2-136"/>
</dbReference>
<dbReference type="PDB" id="9DWG">
    <property type="method" value="EM"/>
    <property type="resolution" value="3.30 A"/>
    <property type="chains" value="A/E=2-136"/>
</dbReference>
<dbReference type="PDB" id="9DWH">
    <property type="method" value="EM"/>
    <property type="resolution" value="3.30 A"/>
    <property type="chains" value="A/E=2-136"/>
</dbReference>
<dbReference type="PDB" id="9DWI">
    <property type="method" value="EM"/>
    <property type="resolution" value="3.30 A"/>
    <property type="chains" value="A/E=2-136"/>
</dbReference>
<dbReference type="PDB" id="9DWJ">
    <property type="method" value="EM"/>
    <property type="resolution" value="3.40 A"/>
    <property type="chains" value="A/E=2-136"/>
</dbReference>
<dbReference type="PDB" id="9DWK">
    <property type="method" value="EM"/>
    <property type="resolution" value="4.30 A"/>
    <property type="chains" value="A/E=2-136"/>
</dbReference>
<dbReference type="PDB" id="9DWL">
    <property type="method" value="EM"/>
    <property type="resolution" value="3.90 A"/>
    <property type="chains" value="A/E=2-136"/>
</dbReference>
<dbReference type="PDB" id="9DWM">
    <property type="method" value="EM"/>
    <property type="resolution" value="4.20 A"/>
    <property type="chains" value="A/E=2-136"/>
</dbReference>
<dbReference type="PDB" id="9GMK">
    <property type="method" value="EM"/>
    <property type="resolution" value="3.50 A"/>
    <property type="chains" value="A/E=1-136"/>
</dbReference>
<dbReference type="PDB" id="9GMR">
    <property type="method" value="EM"/>
    <property type="resolution" value="2.80 A"/>
    <property type="chains" value="A/E=1-136"/>
</dbReference>
<dbReference type="PDB" id="9IPU">
    <property type="method" value="EM"/>
    <property type="resolution" value="4.30 A"/>
    <property type="chains" value="A/E=2-136"/>
</dbReference>
<dbReference type="PDBsum" id="2IIJ"/>
<dbReference type="PDBsum" id="2X4W"/>
<dbReference type="PDBsum" id="2X4X"/>
<dbReference type="PDBsum" id="2X4Y"/>
<dbReference type="PDBsum" id="3AV1"/>
<dbReference type="PDBsum" id="3DB3"/>
<dbReference type="PDBsum" id="3MO8"/>
<dbReference type="PDBsum" id="3QO2"/>
<dbReference type="PDBsum" id="3R93"/>
<dbReference type="PDBsum" id="4MZF"/>
<dbReference type="PDBsum" id="4MZG"/>
<dbReference type="PDBsum" id="4MZH"/>
<dbReference type="PDBsum" id="4OUC"/>
<dbReference type="PDBsum" id="5B0Y"/>
<dbReference type="PDBsum" id="5B0Z"/>
<dbReference type="PDBsum" id="5B40"/>
<dbReference type="PDBsum" id="5BO0"/>
<dbReference type="PDBsum" id="5CIU"/>
<dbReference type="PDBsum" id="5VAC"/>
<dbReference type="PDBsum" id="6ACE"/>
<dbReference type="PDBsum" id="6FML"/>
<dbReference type="PDBsum" id="6T79"/>
<dbReference type="PDBsum" id="6T7A"/>
<dbReference type="PDBsum" id="6T7B"/>
<dbReference type="PDBsum" id="6T7C"/>
<dbReference type="PDBsum" id="6T7D"/>
<dbReference type="PDBsum" id="6X59"/>
<dbReference type="PDBsum" id="6X5A"/>
<dbReference type="PDBsum" id="6XJD"/>
<dbReference type="PDBsum" id="6Y5D"/>
<dbReference type="PDBsum" id="6Y5E"/>
<dbReference type="PDBsum" id="7BQZ"/>
<dbReference type="PDBsum" id="7BU9"/>
<dbReference type="PDBsum" id="7JO9"/>
<dbReference type="PDBsum" id="7JOA"/>
<dbReference type="PDBsum" id="7JZV"/>
<dbReference type="PDBsum" id="7PET"/>
<dbReference type="PDBsum" id="7PEU"/>
<dbReference type="PDBsum" id="7PEV"/>
<dbReference type="PDBsum" id="7PEW"/>
<dbReference type="PDBsum" id="7PEX"/>
<dbReference type="PDBsum" id="7PEY"/>
<dbReference type="PDBsum" id="7PEZ"/>
<dbReference type="PDBsum" id="7PF0"/>
<dbReference type="PDBsum" id="7PF2"/>
<dbReference type="PDBsum" id="7PF3"/>
<dbReference type="PDBsum" id="7PF4"/>
<dbReference type="PDBsum" id="7PF5"/>
<dbReference type="PDBsum" id="7PF6"/>
<dbReference type="PDBsum" id="7PFA"/>
<dbReference type="PDBsum" id="7PFC"/>
<dbReference type="PDBsum" id="7PFD"/>
<dbReference type="PDBsum" id="7PFE"/>
<dbReference type="PDBsum" id="7PFF"/>
<dbReference type="PDBsum" id="7PFT"/>
<dbReference type="PDBsum" id="7PFU"/>
<dbReference type="PDBsum" id="7PFV"/>
<dbReference type="PDBsum" id="7PFW"/>
<dbReference type="PDBsum" id="7PFX"/>
<dbReference type="PDBsum" id="7TAN"/>
<dbReference type="PDBsum" id="7U50"/>
<dbReference type="PDBsum" id="7U51"/>
<dbReference type="PDBsum" id="7U52"/>
<dbReference type="PDBsum" id="7U53"/>
<dbReference type="PDBsum" id="7UV9"/>
<dbReference type="PDBsum" id="7UVA"/>
<dbReference type="PDBsum" id="7XCR"/>
<dbReference type="PDBsum" id="7XCT"/>
<dbReference type="PDBsum" id="7XD0"/>
<dbReference type="PDBsum" id="7YRD"/>
<dbReference type="PDBsum" id="8AAG"/>
<dbReference type="PDBsum" id="8ATF"/>
<dbReference type="PDBsum" id="8AV6"/>
<dbReference type="PDBsum" id="8GRQ"/>
<dbReference type="PDBsum" id="8HQY"/>
<dbReference type="PDBsum" id="8HR1"/>
<dbReference type="PDBsum" id="8JLB"/>
<dbReference type="PDBsum" id="8JLD"/>
<dbReference type="PDBsum" id="8OL1"/>
<dbReference type="PDBsum" id="8VMJ"/>
<dbReference type="PDBsum" id="8VMN"/>
<dbReference type="PDBsum" id="8VO0"/>
<dbReference type="PDBsum" id="8VOB"/>
<dbReference type="PDBsum" id="8VWS"/>
<dbReference type="PDBsum" id="8VWT"/>
<dbReference type="PDBsum" id="8VWU"/>
<dbReference type="PDBsum" id="8VWV"/>
<dbReference type="PDBsum" id="8X7I"/>
<dbReference type="PDBsum" id="8X7J"/>
<dbReference type="PDBsum" id="8X7K"/>
<dbReference type="PDBsum" id="9DWF"/>
<dbReference type="PDBsum" id="9DWG"/>
<dbReference type="PDBsum" id="9DWH"/>
<dbReference type="PDBsum" id="9DWI"/>
<dbReference type="PDBsum" id="9DWJ"/>
<dbReference type="PDBsum" id="9DWK"/>
<dbReference type="PDBsum" id="9DWL"/>
<dbReference type="PDBsum" id="9DWM"/>
<dbReference type="PDBsum" id="9GMK"/>
<dbReference type="PDBsum" id="9GMR"/>
<dbReference type="PDBsum" id="9IPU"/>
<dbReference type="EMDB" id="EMD-10390"/>
<dbReference type="EMDB" id="EMD-10391"/>
<dbReference type="EMDB" id="EMD-10392"/>
<dbReference type="EMDB" id="EMD-10393"/>
<dbReference type="EMDB" id="EMD-10394"/>
<dbReference type="EMDB" id="EMD-10694"/>
<dbReference type="EMDB" id="EMD-10695"/>
<dbReference type="EMDB" id="EMD-11005"/>
<dbReference type="EMDB" id="EMD-11006"/>
<dbReference type="EMDB" id="EMD-13356"/>
<dbReference type="EMDB" id="EMD-13357"/>
<dbReference type="EMDB" id="EMD-13358"/>
<dbReference type="EMDB" id="EMD-13359"/>
<dbReference type="EMDB" id="EMD-13360"/>
<dbReference type="EMDB" id="EMD-13361"/>
<dbReference type="EMDB" id="EMD-13362"/>
<dbReference type="EMDB" id="EMD-13363"/>
<dbReference type="EMDB" id="EMD-13365"/>
<dbReference type="EMDB" id="EMD-13366"/>
<dbReference type="EMDB" id="EMD-13367"/>
<dbReference type="EMDB" id="EMD-13368"/>
<dbReference type="EMDB" id="EMD-13369"/>
<dbReference type="EMDB" id="EMD-13370"/>
<dbReference type="EMDB" id="EMD-13371"/>
<dbReference type="EMDB" id="EMD-13372"/>
<dbReference type="EMDB" id="EMD-13373"/>
<dbReference type="EMDB" id="EMD-13374"/>
<dbReference type="EMDB" id="EMD-13379"/>
<dbReference type="EMDB" id="EMD-13380"/>
<dbReference type="EMDB" id="EMD-13381"/>
<dbReference type="EMDB" id="EMD-13382"/>
<dbReference type="EMDB" id="EMD-13383"/>
<dbReference type="EMDB" id="EMD-15647"/>
<dbReference type="EMDB" id="EMD-16936"/>
<dbReference type="EMDB" id="EMD-18793"/>
<dbReference type="EMDB" id="EMD-22046"/>
<dbReference type="EMDB" id="EMD-22047"/>
<dbReference type="EMDB" id="EMD-22206"/>
<dbReference type="EMDB" id="EMD-22408"/>
<dbReference type="EMDB" id="EMD-22409"/>
<dbReference type="EMDB" id="EMD-22581"/>
<dbReference type="EMDB" id="EMD-25777"/>
<dbReference type="EMDB" id="EMD-25778"/>
<dbReference type="EMDB" id="EMD-26336"/>
<dbReference type="EMDB" id="EMD-26337"/>
<dbReference type="EMDB" id="EMD-26338"/>
<dbReference type="EMDB" id="EMD-26339"/>
<dbReference type="EMDB" id="EMD-26809"/>
<dbReference type="EMDB" id="EMD-26810"/>
<dbReference type="EMDB" id="EMD-36391"/>
<dbReference type="EMDB" id="EMD-36393"/>
<dbReference type="EMDB" id="EMD-38099"/>
<dbReference type="EMDB" id="EMD-38100"/>
<dbReference type="EMDB" id="EMD-38101"/>
<dbReference type="EMDB" id="EMD-4277"/>
<dbReference type="EMDB" id="EMD-43358"/>
<dbReference type="EMDB" id="EMD-43360"/>
<dbReference type="EMDB" id="EMD-43363"/>
<dbReference type="EMDB" id="EMD-43373"/>
<dbReference type="EMDB" id="EMD-43595"/>
<dbReference type="EMDB" id="EMD-43596"/>
<dbReference type="EMDB" id="EMD-43600"/>
<dbReference type="EMDB" id="EMD-43601"/>
<dbReference type="EMDB" id="EMD-4711"/>
<dbReference type="EMDB" id="EMD-47242"/>
<dbReference type="EMDB" id="EMD-47243"/>
<dbReference type="EMDB" id="EMD-47246"/>
<dbReference type="EMDB" id="EMD-47249"/>
<dbReference type="EMDB" id="EMD-47252"/>
<dbReference type="EMDB" id="EMD-47253"/>
<dbReference type="EMDB" id="EMD-47254"/>
<dbReference type="EMDB" id="EMD-47255"/>
<dbReference type="EMDB" id="EMD-51449"/>
<dbReference type="EMDB" id="EMD-51453"/>
<dbReference type="EMDB" id="EMD-60781"/>
<dbReference type="SMR" id="Q71DI3"/>
<dbReference type="BioGRID" id="126025">
    <property type="interactions" value="226"/>
</dbReference>
<dbReference type="BioGRID" id="130616">
    <property type="interactions" value="226"/>
</dbReference>
<dbReference type="BioGRID" id="575920">
    <property type="interactions" value="33"/>
</dbReference>
<dbReference type="ComplexPortal" id="CPX-5668">
    <property type="entry name" value="Nucleosome, variant H3.2-H2A.2-H2B.1"/>
</dbReference>
<dbReference type="DIP" id="DIP-48606N"/>
<dbReference type="FunCoup" id="Q71DI3">
    <property type="interactions" value="1013"/>
</dbReference>
<dbReference type="IntAct" id="Q71DI3">
    <property type="interactions" value="126"/>
</dbReference>
<dbReference type="MINT" id="Q71DI3"/>
<dbReference type="STRING" id="9606.ENSP00000333277"/>
<dbReference type="ChEMBL" id="CHEMBL4295875"/>
<dbReference type="GlyGen" id="Q71DI3">
    <property type="glycosylation" value="1 site, 1 O-linked glycan (1 site)"/>
</dbReference>
<dbReference type="iPTMnet" id="Q71DI3"/>
<dbReference type="MetOSite" id="Q71DI3"/>
<dbReference type="PhosphoSitePlus" id="Q71DI3"/>
<dbReference type="SwissPalm" id="Q71DI3"/>
<dbReference type="BioMuta" id="HIST2H3C"/>
<dbReference type="DMDM" id="74758899"/>
<dbReference type="jPOST" id="Q71DI3"/>
<dbReference type="MassIVE" id="Q71DI3"/>
<dbReference type="PaxDb" id="9606-ENSP00000333277"/>
<dbReference type="PeptideAtlas" id="Q71DI3"/>
<dbReference type="ProteomicsDB" id="68597"/>
<dbReference type="Pumba" id="Q71DI3"/>
<dbReference type="TopDownProteomics" id="Q71DI3"/>
<dbReference type="Antibodypedia" id="53833">
    <property type="antibodies" value="118 antibodies from 16 providers"/>
</dbReference>
<dbReference type="Antibodypedia" id="68017">
    <property type="antibodies" value="156 antibodies from 9 providers"/>
</dbReference>
<dbReference type="Antibodypedia" id="73939">
    <property type="antibodies" value="1494 antibodies from 5 providers"/>
</dbReference>
<dbReference type="DNASU" id="126961"/>
<dbReference type="Ensembl" id="ENST00000331491.2">
    <property type="protein sequence ID" value="ENSP00000333277.2"/>
    <property type="gene ID" value="ENSG00000183598.4"/>
</dbReference>
<dbReference type="Ensembl" id="ENST00000369158.2">
    <property type="protein sequence ID" value="ENSP00000358154.1"/>
    <property type="gene ID" value="ENSG00000203811.2"/>
</dbReference>
<dbReference type="Ensembl" id="ENST00000403683.2">
    <property type="protein sequence ID" value="ENSP00000385479.1"/>
    <property type="gene ID" value="ENSG00000203852.4"/>
</dbReference>
<dbReference type="GeneID" id="126961"/>
<dbReference type="GeneID" id="333932"/>
<dbReference type="GeneID" id="653604"/>
<dbReference type="KEGG" id="hsa:126961"/>
<dbReference type="KEGG" id="hsa:333932"/>
<dbReference type="KEGG" id="hsa:653604"/>
<dbReference type="MANE-Select" id="ENST00000331491.2">
    <property type="protein sequence ID" value="ENSP00000333277.2"/>
    <property type="RefSeq nucleotide sequence ID" value="NM_001123375.3"/>
    <property type="RefSeq protein sequence ID" value="NP_001116847.1"/>
</dbReference>
<dbReference type="MANE-Select" id="ENST00000369158.2">
    <property type="protein sequence ID" value="ENSP00000358154.1"/>
    <property type="RefSeq nucleotide sequence ID" value="NM_021059.3"/>
    <property type="RefSeq protein sequence ID" value="NP_066403.2"/>
</dbReference>
<dbReference type="MANE-Select" id="ENST00000403683.2">
    <property type="protein sequence ID" value="ENSP00000385479.1"/>
    <property type="RefSeq nucleotide sequence ID" value="NM_001005464.3"/>
    <property type="RefSeq protein sequence ID" value="NP_001005464.1"/>
</dbReference>
<dbReference type="UCSC" id="uc001esv.4">
    <property type="organism name" value="human"/>
</dbReference>
<dbReference type="AGR" id="HGNC:20503"/>
<dbReference type="AGR" id="HGNC:20505"/>
<dbReference type="AGR" id="HGNC:25311"/>
<dbReference type="CTD" id="126961"/>
<dbReference type="CTD" id="333932"/>
<dbReference type="CTD" id="653604"/>
<dbReference type="DisGeNET" id="126961"/>
<dbReference type="GeneCards" id="H3C13"/>
<dbReference type="GeneCards" id="H3C14"/>
<dbReference type="GeneCards" id="H3C15"/>
<dbReference type="HGNC" id="HGNC:25311">
    <property type="gene designation" value="H3C13"/>
</dbReference>
<dbReference type="HGNC" id="HGNC:20503">
    <property type="gene designation" value="H3C14"/>
</dbReference>
<dbReference type="HGNC" id="HGNC:20505">
    <property type="gene designation" value="H3C15"/>
</dbReference>
<dbReference type="HPA" id="ENSG00000183598">
    <property type="expression patterns" value="Tissue enhanced (bone)"/>
</dbReference>
<dbReference type="HPA" id="ENSG00000203811">
    <property type="expression patterns" value="Tissue enhanced (brain)"/>
</dbReference>
<dbReference type="HPA" id="ENSG00000203852">
    <property type="expression patterns" value="Tissue enhanced (bone)"/>
</dbReference>
<dbReference type="MIM" id="142780">
    <property type="type" value="gene"/>
</dbReference>
<dbReference type="neXtProt" id="NX_Q71DI3"/>
<dbReference type="OpenTargets" id="ENSG00000183598"/>
<dbReference type="OpenTargets" id="ENSG00000203811"/>
<dbReference type="VEuPathDB" id="HostDB:ENSG00000183598"/>
<dbReference type="VEuPathDB" id="HostDB:ENSG00000203811"/>
<dbReference type="VEuPathDB" id="HostDB:ENSG00000203852"/>
<dbReference type="eggNOG" id="KOG1745">
    <property type="taxonomic scope" value="Eukaryota"/>
</dbReference>
<dbReference type="GeneTree" id="ENSGT01130000278271"/>
<dbReference type="HOGENOM" id="CLU_078295_4_0_1"/>
<dbReference type="InParanoid" id="Q71DI3"/>
<dbReference type="OMA" id="ASEAYLX"/>
<dbReference type="OrthoDB" id="6256050at2759"/>
<dbReference type="PAN-GO" id="Q71DI3">
    <property type="GO annotations" value="1 GO annotation based on evolutionary models"/>
</dbReference>
<dbReference type="PhylomeDB" id="Q71DI3"/>
<dbReference type="TreeFam" id="TF314241"/>
<dbReference type="PathwayCommons" id="Q71DI3"/>
<dbReference type="Reactome" id="R-HSA-1266695">
    <property type="pathway name" value="Interleukin-7 signaling"/>
</dbReference>
<dbReference type="Reactome" id="R-HSA-1912408">
    <property type="pathway name" value="Pre-NOTCH Transcription and Translation"/>
</dbReference>
<dbReference type="Reactome" id="R-HSA-201722">
    <property type="pathway name" value="Formation of the beta-catenin:TCF transactivating complex"/>
</dbReference>
<dbReference type="Reactome" id="R-HSA-212300">
    <property type="pathway name" value="PRC2 methylates histones and DNA"/>
</dbReference>
<dbReference type="Reactome" id="R-HSA-2299718">
    <property type="pathway name" value="Condensation of Prophase Chromosomes"/>
</dbReference>
<dbReference type="Reactome" id="R-HSA-2559580">
    <property type="pathway name" value="Oxidative Stress Induced Senescence"/>
</dbReference>
<dbReference type="Reactome" id="R-HSA-2559582">
    <property type="pathway name" value="Senescence-Associated Secretory Phenotype (SASP)"/>
</dbReference>
<dbReference type="Reactome" id="R-HSA-3214815">
    <property type="pathway name" value="HDACs deacetylate histones"/>
</dbReference>
<dbReference type="Reactome" id="R-HSA-3214841">
    <property type="pathway name" value="PKMTs methylate histone lysines"/>
</dbReference>
<dbReference type="Reactome" id="R-HSA-3214842">
    <property type="pathway name" value="HDMs demethylate histones"/>
</dbReference>
<dbReference type="Reactome" id="R-HSA-3214847">
    <property type="pathway name" value="HATs acetylate histones"/>
</dbReference>
<dbReference type="Reactome" id="R-HSA-3214858">
    <property type="pathway name" value="RMTs methylate histone arginines"/>
</dbReference>
<dbReference type="Reactome" id="R-HSA-3247509">
    <property type="pathway name" value="Chromatin modifying enzymes"/>
</dbReference>
<dbReference type="Reactome" id="R-HSA-427359">
    <property type="pathway name" value="SIRT1 negatively regulates rRNA expression"/>
</dbReference>
<dbReference type="Reactome" id="R-HSA-427389">
    <property type="pathway name" value="ERCC6 (CSB) and EHMT2 (G9a) positively regulate rRNA expression"/>
</dbReference>
<dbReference type="Reactome" id="R-HSA-427413">
    <property type="pathway name" value="NoRC negatively regulates rRNA expression"/>
</dbReference>
<dbReference type="Reactome" id="R-HSA-5250924">
    <property type="pathway name" value="B-WICH complex positively regulates rRNA expression"/>
</dbReference>
<dbReference type="Reactome" id="R-HSA-5334118">
    <property type="pathway name" value="DNA methylation"/>
</dbReference>
<dbReference type="Reactome" id="R-HSA-5578749">
    <property type="pathway name" value="Transcriptional regulation by small RNAs"/>
</dbReference>
<dbReference type="Reactome" id="R-HSA-5617472">
    <property type="pathway name" value="Activation of anterior HOX genes in hindbrain development during early embryogenesis"/>
</dbReference>
<dbReference type="Reactome" id="R-HSA-5625886">
    <property type="pathway name" value="Activated PKN1 stimulates transcription of AR (androgen receptor) regulated genes KLK2 and KLK3"/>
</dbReference>
<dbReference type="Reactome" id="R-HSA-68616">
    <property type="pathway name" value="Assembly of the ORC complex at the origin of replication"/>
</dbReference>
<dbReference type="Reactome" id="R-HSA-73728">
    <property type="pathway name" value="RNA Polymerase I Promoter Opening"/>
</dbReference>
<dbReference type="Reactome" id="R-HSA-73772">
    <property type="pathway name" value="RNA Polymerase I Promoter Escape"/>
</dbReference>
<dbReference type="Reactome" id="R-HSA-8936459">
    <property type="pathway name" value="RUNX1 regulates genes involved in megakaryocyte differentiation and platelet function"/>
</dbReference>
<dbReference type="Reactome" id="R-HSA-8939236">
    <property type="pathway name" value="RUNX1 regulates transcription of genes involved in differentiation of HSCs"/>
</dbReference>
<dbReference type="Reactome" id="R-HSA-9018519">
    <property type="pathway name" value="Estrogen-dependent gene expression"/>
</dbReference>
<dbReference type="Reactome" id="R-HSA-912446">
    <property type="pathway name" value="Meiotic recombination"/>
</dbReference>
<dbReference type="Reactome" id="R-HSA-9609690">
    <property type="pathway name" value="HCMV Early Events"/>
</dbReference>
<dbReference type="Reactome" id="R-HSA-9610379">
    <property type="pathway name" value="HCMV Late Events"/>
</dbReference>
<dbReference type="Reactome" id="R-HSA-9616222">
    <property type="pathway name" value="Transcriptional regulation of granulopoiesis"/>
</dbReference>
<dbReference type="Reactome" id="R-HSA-9710421">
    <property type="pathway name" value="Defective pyroptosis"/>
</dbReference>
<dbReference type="Reactome" id="R-HSA-977225">
    <property type="pathway name" value="Amyloid fiber formation"/>
</dbReference>
<dbReference type="Reactome" id="R-HSA-9821002">
    <property type="pathway name" value="Chromatin modifications during the maternal to zygotic transition (MZT)"/>
</dbReference>
<dbReference type="Reactome" id="R-HSA-983231">
    <property type="pathway name" value="Factors involved in megakaryocyte development and platelet production"/>
</dbReference>
<dbReference type="Reactome" id="R-HSA-9841922">
    <property type="pathway name" value="MLL4 and MLL3 complexes regulate expression of PPARG target genes in adipogenesis and hepatic steatosis"/>
</dbReference>
<dbReference type="Reactome" id="R-HSA-9843940">
    <property type="pathway name" value="Regulation of endogenous retroelements by KRAB-ZFP proteins"/>
</dbReference>
<dbReference type="Reactome" id="R-HSA-9843970">
    <property type="pathway name" value="Regulation of endogenous retroelements by the Human Silencing Hub (HUSH) complex"/>
</dbReference>
<dbReference type="Reactome" id="R-HSA-9845323">
    <property type="pathway name" value="Regulation of endogenous retroelements by Piwi-interacting RNAs (piRNAs)"/>
</dbReference>
<dbReference type="SignaLink" id="Q71DI3"/>
<dbReference type="SIGNOR" id="Q71DI3"/>
<dbReference type="BioGRID-ORCS" id="126961">
    <property type="hits" value="322 hits in 639 CRISPR screens"/>
</dbReference>
<dbReference type="BioGRID-ORCS" id="333932">
    <property type="hits" value="489 hits in 985 CRISPR screens"/>
</dbReference>
<dbReference type="BioGRID-ORCS" id="653604">
    <property type="hits" value="683 hits in 1055 CRISPR screens"/>
</dbReference>
<dbReference type="ChiTaRS" id="HIST2H3C">
    <property type="organism name" value="human"/>
</dbReference>
<dbReference type="EvolutionaryTrace" id="Q71DI3"/>
<dbReference type="GeneWiki" id="HIST2H3C"/>
<dbReference type="Pharos" id="Q71DI3">
    <property type="development level" value="Tbio"/>
</dbReference>
<dbReference type="PRO" id="PR:Q71DI3"/>
<dbReference type="Proteomes" id="UP000005640">
    <property type="component" value="Chromosome 1"/>
</dbReference>
<dbReference type="RNAct" id="Q71DI3">
    <property type="molecule type" value="protein"/>
</dbReference>
<dbReference type="Bgee" id="ENSG00000183598">
    <property type="expression patterns" value="Expressed in bone marrow cell and 94 other cell types or tissues"/>
</dbReference>
<dbReference type="GO" id="GO:0070062">
    <property type="term" value="C:extracellular exosome"/>
    <property type="evidence" value="ECO:0007005"/>
    <property type="project" value="UniProtKB"/>
</dbReference>
<dbReference type="GO" id="GO:0005576">
    <property type="term" value="C:extracellular region"/>
    <property type="evidence" value="ECO:0000304"/>
    <property type="project" value="Reactome"/>
</dbReference>
<dbReference type="GO" id="GO:0005654">
    <property type="term" value="C:nucleoplasm"/>
    <property type="evidence" value="ECO:0000314"/>
    <property type="project" value="HPA"/>
</dbReference>
<dbReference type="GO" id="GO:0000786">
    <property type="term" value="C:nucleosome"/>
    <property type="evidence" value="ECO:0000314"/>
    <property type="project" value="UniProtKB"/>
</dbReference>
<dbReference type="GO" id="GO:0005634">
    <property type="term" value="C:nucleus"/>
    <property type="evidence" value="ECO:0000314"/>
    <property type="project" value="UniProtKB"/>
</dbReference>
<dbReference type="GO" id="GO:0003682">
    <property type="term" value="F:chromatin binding"/>
    <property type="evidence" value="ECO:0007669"/>
    <property type="project" value="Ensembl"/>
</dbReference>
<dbReference type="GO" id="GO:0003677">
    <property type="term" value="F:DNA binding"/>
    <property type="evidence" value="ECO:0007669"/>
    <property type="project" value="UniProtKB-KW"/>
</dbReference>
<dbReference type="GO" id="GO:0046982">
    <property type="term" value="F:protein heterodimerization activity"/>
    <property type="evidence" value="ECO:0007669"/>
    <property type="project" value="InterPro"/>
</dbReference>
<dbReference type="GO" id="GO:0030527">
    <property type="term" value="F:structural constituent of chromatin"/>
    <property type="evidence" value="ECO:0007669"/>
    <property type="project" value="InterPro"/>
</dbReference>
<dbReference type="GO" id="GO:0006325">
    <property type="term" value="P:chromatin organization"/>
    <property type="evidence" value="ECO:0000303"/>
    <property type="project" value="ComplexPortal"/>
</dbReference>
<dbReference type="GO" id="GO:0010467">
    <property type="term" value="P:gene expression"/>
    <property type="evidence" value="ECO:0007669"/>
    <property type="project" value="Ensembl"/>
</dbReference>
<dbReference type="GO" id="GO:0000122">
    <property type="term" value="P:negative regulation of transcription by RNA polymerase II"/>
    <property type="evidence" value="ECO:0007669"/>
    <property type="project" value="Ensembl"/>
</dbReference>
<dbReference type="GO" id="GO:0006334">
    <property type="term" value="P:nucleosome assembly"/>
    <property type="evidence" value="ECO:0000314"/>
    <property type="project" value="UniProtKB"/>
</dbReference>
<dbReference type="CDD" id="cd22911">
    <property type="entry name" value="HFD_H3"/>
    <property type="match status" value="1"/>
</dbReference>
<dbReference type="FunFam" id="1.10.20.10:FF:000078">
    <property type="entry name" value="Histone H3"/>
    <property type="match status" value="1"/>
</dbReference>
<dbReference type="FunFam" id="1.10.20.10:FF:000044">
    <property type="entry name" value="Histone H3.3"/>
    <property type="match status" value="1"/>
</dbReference>
<dbReference type="Gene3D" id="1.10.20.10">
    <property type="entry name" value="Histone, subunit A"/>
    <property type="match status" value="1"/>
</dbReference>
<dbReference type="IDEAL" id="IID00088"/>
<dbReference type="InterPro" id="IPR009072">
    <property type="entry name" value="Histone-fold"/>
</dbReference>
<dbReference type="InterPro" id="IPR007125">
    <property type="entry name" value="Histone_H2A/H2B/H3"/>
</dbReference>
<dbReference type="InterPro" id="IPR000164">
    <property type="entry name" value="Histone_H3/CENP-A"/>
</dbReference>
<dbReference type="PANTHER" id="PTHR11426">
    <property type="entry name" value="HISTONE H3"/>
    <property type="match status" value="1"/>
</dbReference>
<dbReference type="Pfam" id="PF00125">
    <property type="entry name" value="Histone"/>
    <property type="match status" value="1"/>
</dbReference>
<dbReference type="PRINTS" id="PR00622">
    <property type="entry name" value="HISTONEH3"/>
</dbReference>
<dbReference type="SMART" id="SM00428">
    <property type="entry name" value="H3"/>
    <property type="match status" value="1"/>
</dbReference>
<dbReference type="SUPFAM" id="SSF47113">
    <property type="entry name" value="Histone-fold"/>
    <property type="match status" value="1"/>
</dbReference>
<dbReference type="PROSITE" id="PS00322">
    <property type="entry name" value="HISTONE_H3_1"/>
    <property type="match status" value="1"/>
</dbReference>
<dbReference type="PROSITE" id="PS00959">
    <property type="entry name" value="HISTONE_H3_2"/>
    <property type="match status" value="1"/>
</dbReference>
<feature type="chain" id="PRO_0000250357" description="Histone H3.2">
    <location>
        <begin position="1"/>
        <end position="136"/>
    </location>
</feature>
<feature type="region of interest" description="Disordered" evidence="6">
    <location>
        <begin position="1"/>
        <end position="43"/>
    </location>
</feature>
<feature type="modified residue" description="Asymmetric dimethylarginine; by PRMT6; alternate" evidence="25 27 28">
    <location>
        <position position="3"/>
    </location>
</feature>
<feature type="modified residue" description="Citrulline; alternate" evidence="19">
    <location>
        <position position="3"/>
    </location>
</feature>
<feature type="modified residue" description="Phosphothreonine; by HASPIN and VRK1" evidence="14 16 51">
    <location>
        <position position="4"/>
    </location>
</feature>
<feature type="modified residue" description="Allysine; alternate" evidence="44">
    <location>
        <position position="5"/>
    </location>
</feature>
<feature type="modified residue" description="N6,N6,N6-trimethyllysine; alternate" evidence="17 23">
    <location>
        <position position="5"/>
    </location>
</feature>
<feature type="modified residue" description="N6,N6-dimethyllysine; alternate" evidence="17 23">
    <location>
        <position position="5"/>
    </location>
</feature>
<feature type="modified residue" description="N6-(2-hydroxyisobutyryl)lysine; alternate" evidence="40">
    <location>
        <position position="5"/>
    </location>
</feature>
<feature type="modified residue" description="N6-(beta-hydroxybutyryl)lysine; alternate" evidence="42">
    <location>
        <position position="5"/>
    </location>
</feature>
<feature type="modified residue" description="N6-acetyllysine; alternate" evidence="23">
    <location>
        <position position="5"/>
    </location>
</feature>
<feature type="modified residue" description="N6-crotonyllysine; alternate" evidence="34 46">
    <location>
        <position position="5"/>
    </location>
</feature>
<feature type="modified residue" description="N6-methyllysine; alternate" evidence="17 23">
    <location>
        <position position="5"/>
    </location>
</feature>
<feature type="modified residue" description="5-glutamyl dopamine; alternate" evidence="54">
    <location>
        <position position="6"/>
    </location>
</feature>
<feature type="modified residue" description="5-glutamyl serotonin; alternate" evidence="50">
    <location>
        <position position="6"/>
    </location>
</feature>
<feature type="modified residue" description="Phosphothreonine; by PKC" evidence="31">
    <location>
        <position position="7"/>
    </location>
</feature>
<feature type="modified residue" description="Citrulline; alternate" evidence="11 19">
    <location>
        <position position="9"/>
    </location>
</feature>
<feature type="modified residue" description="Symmetric dimethylarginine; by PRMT5; alternate" evidence="3">
    <location>
        <position position="9"/>
    </location>
</feature>
<feature type="modified residue" description="N6,N6,N6-trimethyllysine; alternate" evidence="8 16 17 23">
    <location>
        <position position="10"/>
    </location>
</feature>
<feature type="modified residue" description="N6,N6-dimethyllysine; alternate" evidence="8 16 17 23">
    <location>
        <position position="10"/>
    </location>
</feature>
<feature type="modified residue" description="N6-(2-hydroxyisobutyryl)lysine; alternate" evidence="40">
    <location>
        <position position="10"/>
    </location>
</feature>
<feature type="modified residue" description="N6-(beta-hydroxybutyryl)lysine; alternate" evidence="42">
    <location>
        <position position="10"/>
    </location>
</feature>
<feature type="modified residue" description="N6-acetyllysine; alternate" evidence="16 17 18 20 23">
    <location>
        <position position="10"/>
    </location>
</feature>
<feature type="modified residue" description="N6-butyryllysine; alternate" evidence="41">
    <location>
        <position position="10"/>
    </location>
</feature>
<feature type="modified residue" description="N6-crotonyllysine; alternate" evidence="34 46">
    <location>
        <position position="10"/>
    </location>
</feature>
<feature type="modified residue" description="N6-lactoyllysine; alternate" evidence="53">
    <location>
        <position position="10"/>
    </location>
</feature>
<feature type="modified residue" description="N6-methyllysine; alternate" evidence="8 16 17 23">
    <location>
        <position position="10"/>
    </location>
</feature>
<feature type="modified residue" description="ADP-ribosylserine; alternate" evidence="45 48 56">
    <location>
        <position position="11"/>
    </location>
</feature>
<feature type="modified residue" description="Phosphoserine; alternate; by AURKB, AURKC, RPS6KA3, RPS6KA4 and RPS6KA5" evidence="7 9 10 14 16">
    <location>
        <position position="11"/>
    </location>
</feature>
<feature type="modified residue" description="Phosphothreonine; by PKC" evidence="10 26 38">
    <location>
        <position position="12"/>
    </location>
</feature>
<feature type="modified residue" description="N6-(2-hydroxyisobutyryl)lysine; alternate" evidence="40">
    <location>
        <position position="15"/>
    </location>
</feature>
<feature type="modified residue" description="N6-(beta-hydroxybutyryl)lysine; alternate" evidence="42">
    <location>
        <position position="15"/>
    </location>
</feature>
<feature type="modified residue" description="N6-acetyllysine; alternate" evidence="16 17 18 20 23">
    <location>
        <position position="15"/>
    </location>
</feature>
<feature type="modified residue" description="N6-glutaryllysine; alternate" evidence="52">
    <location>
        <position position="15"/>
    </location>
</feature>
<feature type="modified residue" description="N6-lactoyllysine; alternate" evidence="3">
    <location>
        <position position="15"/>
    </location>
</feature>
<feature type="modified residue" description="N6-succinyllysine; alternate" evidence="37">
    <location>
        <position position="15"/>
    </location>
</feature>
<feature type="modified residue" description="Asymmetric dimethylarginine; by CARM1; alternate" evidence="11 12 18">
    <location>
        <position position="18"/>
    </location>
</feature>
<feature type="modified residue" description="Citrulline; alternate" evidence="11 18 19">
    <location>
        <position position="18"/>
    </location>
</feature>
<feature type="modified residue" description="N6-(2-hydroxyisobutyryl)lysine; alternate" evidence="40">
    <location>
        <position position="19"/>
    </location>
</feature>
<feature type="modified residue" description="N6-(beta-hydroxybutyryl)lysine; alternate" evidence="42">
    <location>
        <position position="19"/>
    </location>
</feature>
<feature type="modified residue" description="N6-acetyllysine; alternate" evidence="17 20 23 57">
    <location>
        <position position="19"/>
    </location>
</feature>
<feature type="modified residue" description="N6-butyryllysine; alternate" evidence="41">
    <location>
        <position position="19"/>
    </location>
</feature>
<feature type="modified residue" description="N6-crotonyllysine; alternate" evidence="34">
    <location>
        <position position="19"/>
    </location>
</feature>
<feature type="modified residue" description="N6-glutaryllysine; alternate" evidence="52">
    <location>
        <position position="19"/>
    </location>
</feature>
<feature type="modified residue" description="N6-lactoyllysine; alternate" evidence="53">
    <location>
        <position position="19"/>
    </location>
</feature>
<feature type="modified residue" description="N6-methyllysine; alternate" evidence="17 23">
    <location>
        <position position="19"/>
    </location>
</feature>
<feature type="modified residue" description="N6-(2-hydroxyisobutyryl)lysine; alternate" evidence="40">
    <location>
        <position position="24"/>
    </location>
</feature>
<feature type="modified residue" description="N6-(beta-hydroxybutyryl)lysine; alternate" evidence="42">
    <location>
        <position position="24"/>
    </location>
</feature>
<feature type="modified residue" description="N6-acetyllysine; alternate" evidence="17 20 23">
    <location>
        <position position="24"/>
    </location>
</feature>
<feature type="modified residue" description="N6-butyryllysine; alternate" evidence="41">
    <location>
        <position position="24"/>
    </location>
</feature>
<feature type="modified residue" description="N6-crotonyllysine; alternate" evidence="34 46">
    <location>
        <position position="24"/>
    </location>
</feature>
<feature type="modified residue" description="N6-glutaryllysine; alternate" evidence="52">
    <location>
        <position position="24"/>
    </location>
</feature>
<feature type="modified residue" description="N6-lactoyllysine; alternate" evidence="53">
    <location>
        <position position="24"/>
    </location>
</feature>
<feature type="modified residue" description="N6-methyllysine; alternate" evidence="23">
    <location>
        <position position="24"/>
    </location>
</feature>
<feature type="modified residue" description="Citrulline" evidence="19">
    <location>
        <position position="27"/>
    </location>
</feature>
<feature type="modified residue" description="N6,N6,N6-trimethyllysine; alternate" evidence="16 17 20 23">
    <location>
        <position position="28"/>
    </location>
</feature>
<feature type="modified residue" description="N6,N6-dimethyllysine; alternate" evidence="16 17 20 23">
    <location>
        <position position="28"/>
    </location>
</feature>
<feature type="modified residue" description="N6-(2-hydroxyisobutyryl)lysine; alternate" evidence="40">
    <location>
        <position position="28"/>
    </location>
</feature>
<feature type="modified residue" description="N6-(beta-hydroxybutyryl)lysine; alternate" evidence="42">
    <location>
        <position position="28"/>
    </location>
</feature>
<feature type="modified residue" description="N6-acetyllysine; alternate" evidence="17 20 23">
    <location>
        <position position="28"/>
    </location>
</feature>
<feature type="modified residue" description="N6-crotonyllysine; alternate" evidence="34">
    <location>
        <position position="28"/>
    </location>
</feature>
<feature type="modified residue" description="N6-glutaryllysine; alternate" evidence="52">
    <location>
        <position position="28"/>
    </location>
</feature>
<feature type="modified residue" description="N6-lactoyllysine; alternate" evidence="53">
    <location>
        <position position="28"/>
    </location>
</feature>
<feature type="modified residue" description="N6-methyllysine; alternate" evidence="16 17 20 23">
    <location>
        <position position="28"/>
    </location>
</feature>
<feature type="modified residue" description="ADP-ribosylserine; alternate" evidence="45 48">
    <location>
        <position position="29"/>
    </location>
</feature>
<feature type="modified residue" description="Phosphoserine; alternate; by AURKB, AURKC and RPS6KA5" evidence="7 9 14 15 16">
    <location>
        <position position="29"/>
    </location>
</feature>
<feature type="modified residue" description="N6,N6,N6-trimethyllysine; alternate" evidence="16 17 20 23">
    <location>
        <position position="37"/>
    </location>
</feature>
<feature type="modified residue" description="N6,N6-dimethyllysine; alternate" evidence="16 17 20 23">
    <location>
        <position position="37"/>
    </location>
</feature>
<feature type="modified residue" description="N6-(2-hydroxyisobutyryl)lysine; alternate" evidence="40">
    <location>
        <position position="37"/>
    </location>
</feature>
<feature type="modified residue" description="N6-acetyllysine; alternate" evidence="22 23">
    <location>
        <position position="37"/>
    </location>
</feature>
<feature type="modified residue" description="N6-methyllysine; alternate" evidence="16 17 20 23">
    <location>
        <position position="37"/>
    </location>
</feature>
<feature type="modified residue" description="N6-methyllysine" evidence="1">
    <location>
        <position position="38"/>
    </location>
</feature>
<feature type="modified residue" description="Phosphotyrosine" evidence="30">
    <location>
        <position position="42"/>
    </location>
</feature>
<feature type="modified residue" description="N6,N6,N6-trimethyllysine; alternate" evidence="23 36">
    <location>
        <position position="57"/>
    </location>
</feature>
<feature type="modified residue" description="N6-(2-hydroxyisobutyryl)lysine; alternate" evidence="40">
    <location>
        <position position="57"/>
    </location>
</feature>
<feature type="modified residue" description="N6-(beta-hydroxybutyryl)lysine; alternate" evidence="42">
    <location>
        <position position="57"/>
    </location>
</feature>
<feature type="modified residue" description="N6-acetyllysine; alternate" evidence="23">
    <location>
        <position position="57"/>
    </location>
</feature>
<feature type="modified residue" description="N6-crotonyllysine; alternate" evidence="34">
    <location>
        <position position="57"/>
    </location>
</feature>
<feature type="modified residue" description="N6-glutaryllysine; alternate" evidence="52">
    <location>
        <position position="57"/>
    </location>
</feature>
<feature type="modified residue" description="N6-lactoyllysine; alternate" evidence="3">
    <location>
        <position position="57"/>
    </location>
</feature>
<feature type="modified residue" description="N6-methyllysine; by EHMT2; alternate" evidence="23 36">
    <location>
        <position position="57"/>
    </location>
</feature>
<feature type="modified residue" description="N6-succinyllysine; alternate" evidence="37">
    <location>
        <position position="57"/>
    </location>
</feature>
<feature type="modified residue" description="Phosphoserine" evidence="32">
    <location>
        <position position="58"/>
    </location>
</feature>
<feature type="modified residue" description="N6-(2-hydroxyisobutyryl)lysine; alternate" evidence="40">
    <location>
        <position position="65"/>
    </location>
</feature>
<feature type="modified residue" description="N6-methyllysine; alternate" evidence="17 23">
    <location>
        <position position="65"/>
    </location>
</feature>
<feature type="modified residue" description="N6,N6,N6-trimethyllysine; alternate" evidence="3">
    <location>
        <position position="80"/>
    </location>
</feature>
<feature type="modified residue" description="N6,N6-dimethyllysine; alternate" evidence="13 17 20 23">
    <location>
        <position position="80"/>
    </location>
</feature>
<feature type="modified residue" description="N6-(2-hydroxyisobutyryl)lysine; alternate" evidence="40">
    <location>
        <position position="80"/>
    </location>
</feature>
<feature type="modified residue" description="N6-(beta-hydroxybutyryl)lysine; alternate" evidence="42">
    <location>
        <position position="80"/>
    </location>
</feature>
<feature type="modified residue" description="N6-acetyllysine; alternate" evidence="23">
    <location>
        <position position="80"/>
    </location>
</feature>
<feature type="modified residue" description="N6-glutaryllysine; alternate" evidence="52">
    <location>
        <position position="80"/>
    </location>
</feature>
<feature type="modified residue" description="N6-lactoyllysine; alternate" evidence="53">
    <location>
        <position position="80"/>
    </location>
</feature>
<feature type="modified residue" description="N6-methyllysine; alternate" evidence="13 17 20 23">
    <location>
        <position position="80"/>
    </location>
</feature>
<feature type="modified residue" description="N6-succinyllysine; alternate" evidence="37 47">
    <location>
        <position position="80"/>
    </location>
</feature>
<feature type="modified residue" description="Phosphothreonine" evidence="32">
    <location>
        <position position="81"/>
    </location>
</feature>
<feature type="modified residue" description="Phosphoserine" evidence="4">
    <location>
        <position position="87"/>
    </location>
</feature>
<feature type="modified residue" description="Phosphothreonine" evidence="72">
    <location>
        <position position="108"/>
    </location>
</feature>
<feature type="modified residue" description="N6-acetyllysine; alternate" evidence="29">
    <location>
        <position position="116"/>
    </location>
</feature>
<feature type="modified residue" description="N6-glutaryllysine; alternate" evidence="52">
    <location>
        <position position="116"/>
    </location>
</feature>
<feature type="modified residue" description="N6-(2-hydroxyisobutyryl)lysine; alternate" evidence="40">
    <location>
        <position position="123"/>
    </location>
</feature>
<feature type="modified residue" description="N6-(beta-hydroxybutyryl)lysine; alternate" evidence="42">
    <location>
        <position position="123"/>
    </location>
</feature>
<feature type="modified residue" description="N6-acetyllysine; alternate" evidence="29 39">
    <location>
        <position position="123"/>
    </location>
</feature>
<feature type="modified residue" description="N6-glutaryllysine; alternate" evidence="52">
    <location>
        <position position="123"/>
    </location>
</feature>
<feature type="modified residue" description="N6-methyllysine; alternate" evidence="17 23">
    <location>
        <position position="123"/>
    </location>
</feature>
<feature type="modified residue" description="N6-succinyllysine; alternate" evidence="37 43">
    <location>
        <position position="123"/>
    </location>
</feature>
<feature type="lipid moiety-binding region" description="N6-decanoyllysine" evidence="57">
    <location>
        <position position="19"/>
    </location>
</feature>
<feature type="lipid moiety-binding region" description="S-palmitoyl cysteine" evidence="33">
    <location>
        <position position="111"/>
    </location>
</feature>
<feature type="sequence variant" id="VAR_059313" description="In dbSNP:rs2664732.">
    <original>M</original>
    <variation>T</variation>
    <location>
        <position position="91"/>
    </location>
</feature>
<feature type="sequence variant" id="VAR_059314" description="In dbSNP:rs2664731.">
    <original>A</original>
    <variation>V</variation>
    <location>
        <position position="128"/>
    </location>
</feature>
<feature type="mutagenesis site" description="Abolishes S-palmitoylation." evidence="33">
    <original>C</original>
    <variation>A</variation>
    <location>
        <position position="111"/>
    </location>
</feature>
<feature type="strand" evidence="74">
    <location>
        <begin position="7"/>
        <end position="9"/>
    </location>
</feature>
<feature type="helix" evidence="73">
    <location>
        <begin position="26"/>
        <end position="29"/>
    </location>
</feature>
<feature type="strand" evidence="77">
    <location>
        <begin position="32"/>
        <end position="34"/>
    </location>
</feature>
<feature type="helix" evidence="76">
    <location>
        <begin position="46"/>
        <end position="57"/>
    </location>
</feature>
<feature type="helix" evidence="76">
    <location>
        <begin position="65"/>
        <end position="77"/>
    </location>
</feature>
<feature type="strand" evidence="75">
    <location>
        <begin position="80"/>
        <end position="82"/>
    </location>
</feature>
<feature type="helix" evidence="76">
    <location>
        <begin position="87"/>
        <end position="114"/>
    </location>
</feature>
<feature type="strand" evidence="76">
    <location>
        <begin position="118"/>
        <end position="120"/>
    </location>
</feature>
<feature type="strand" evidence="78">
    <location>
        <begin position="123"/>
        <end position="125"/>
    </location>
</feature>
<feature type="turn" evidence="79">
    <location>
        <begin position="131"/>
        <end position="133"/>
    </location>
</feature>
<keyword id="KW-0002">3D-structure</keyword>
<keyword id="KW-0007">Acetylation</keyword>
<keyword id="KW-0013">ADP-ribosylation</keyword>
<keyword id="KW-0158">Chromosome</keyword>
<keyword id="KW-0164">Citrullination</keyword>
<keyword id="KW-0903">Direct protein sequencing</keyword>
<keyword id="KW-0238">DNA-binding</keyword>
<keyword id="KW-0379">Hydroxylation</keyword>
<keyword id="KW-0449">Lipoprotein</keyword>
<keyword id="KW-0488">Methylation</keyword>
<keyword id="KW-0544">Nucleosome core</keyword>
<keyword id="KW-0539">Nucleus</keyword>
<keyword id="KW-0564">Palmitate</keyword>
<keyword id="KW-0597">Phosphoprotein</keyword>
<keyword id="KW-1267">Proteomics identification</keyword>
<keyword id="KW-1185">Reference proteome</keyword>
<keyword id="KW-0832">Ubl conjugation</keyword>
<evidence type="ECO:0000250" key="1">
    <source>
        <dbReference type="UniProtKB" id="P68431"/>
    </source>
</evidence>
<evidence type="ECO:0000250" key="2">
    <source>
        <dbReference type="UniProtKB" id="P68433"/>
    </source>
</evidence>
<evidence type="ECO:0000250" key="3">
    <source>
        <dbReference type="UniProtKB" id="P84228"/>
    </source>
</evidence>
<evidence type="ECO:0000250" key="4">
    <source>
        <dbReference type="UniProtKB" id="P84243"/>
    </source>
</evidence>
<evidence type="ECO:0000250" key="5">
    <source>
        <dbReference type="UniProtKB" id="P84245"/>
    </source>
</evidence>
<evidence type="ECO:0000256" key="6">
    <source>
        <dbReference type="SAM" id="MobiDB-lite"/>
    </source>
</evidence>
<evidence type="ECO:0000269" key="7">
    <source>
    </source>
</evidence>
<evidence type="ECO:0000269" key="8">
    <source>
    </source>
</evidence>
<evidence type="ECO:0000269" key="9">
    <source>
    </source>
</evidence>
<evidence type="ECO:0000269" key="10">
    <source>
    </source>
</evidence>
<evidence type="ECO:0000269" key="11">
    <source>
    </source>
</evidence>
<evidence type="ECO:0000269" key="12">
    <source>
    </source>
</evidence>
<evidence type="ECO:0000269" key="13">
    <source>
    </source>
</evidence>
<evidence type="ECO:0000269" key="14">
    <source>
    </source>
</evidence>
<evidence type="ECO:0000269" key="15">
    <source>
    </source>
</evidence>
<evidence type="ECO:0000269" key="16">
    <source>
    </source>
</evidence>
<evidence type="ECO:0000269" key="17">
    <source>
    </source>
</evidence>
<evidence type="ECO:0000269" key="18">
    <source>
    </source>
</evidence>
<evidence type="ECO:0000269" key="19">
    <source>
    </source>
</evidence>
<evidence type="ECO:0000269" key="20">
    <source>
    </source>
</evidence>
<evidence type="ECO:0000269" key="21">
    <source>
    </source>
</evidence>
<evidence type="ECO:0000269" key="22">
    <source>
    </source>
</evidence>
<evidence type="ECO:0000269" key="23">
    <source>
    </source>
</evidence>
<evidence type="ECO:0000269" key="24">
    <source>
    </source>
</evidence>
<evidence type="ECO:0000269" key="25">
    <source>
    </source>
</evidence>
<evidence type="ECO:0000269" key="26">
    <source>
    </source>
</evidence>
<evidence type="ECO:0000269" key="27">
    <source>
    </source>
</evidence>
<evidence type="ECO:0000269" key="28">
    <source>
    </source>
</evidence>
<evidence type="ECO:0000269" key="29">
    <source>
    </source>
</evidence>
<evidence type="ECO:0000269" key="30">
    <source>
    </source>
</evidence>
<evidence type="ECO:0000269" key="31">
    <source>
    </source>
</evidence>
<evidence type="ECO:0000269" key="32">
    <source>
    </source>
</evidence>
<evidence type="ECO:0000269" key="33">
    <source>
    </source>
</evidence>
<evidence type="ECO:0000269" key="34">
    <source>
    </source>
</evidence>
<evidence type="ECO:0000269" key="35">
    <source>
    </source>
</evidence>
<evidence type="ECO:0000269" key="36">
    <source>
    </source>
</evidence>
<evidence type="ECO:0000269" key="37">
    <source>
    </source>
</evidence>
<evidence type="ECO:0000269" key="38">
    <source>
    </source>
</evidence>
<evidence type="ECO:0000269" key="39">
    <source>
    </source>
</evidence>
<evidence type="ECO:0000269" key="40">
    <source>
    </source>
</evidence>
<evidence type="ECO:0000269" key="41">
    <source>
    </source>
</evidence>
<evidence type="ECO:0000269" key="42">
    <source>
    </source>
</evidence>
<evidence type="ECO:0000269" key="43">
    <source>
    </source>
</evidence>
<evidence type="ECO:0000269" key="44">
    <source>
    </source>
</evidence>
<evidence type="ECO:0000269" key="45">
    <source>
    </source>
</evidence>
<evidence type="ECO:0000269" key="46">
    <source>
    </source>
</evidence>
<evidence type="ECO:0000269" key="47">
    <source>
    </source>
</evidence>
<evidence type="ECO:0000269" key="48">
    <source>
    </source>
</evidence>
<evidence type="ECO:0000269" key="49">
    <source>
    </source>
</evidence>
<evidence type="ECO:0000269" key="50">
    <source>
    </source>
</evidence>
<evidence type="ECO:0000269" key="51">
    <source>
    </source>
</evidence>
<evidence type="ECO:0000269" key="52">
    <source>
    </source>
</evidence>
<evidence type="ECO:0000269" key="53">
    <source>
    </source>
</evidence>
<evidence type="ECO:0000269" key="54">
    <source>
    </source>
</evidence>
<evidence type="ECO:0000269" key="55">
    <source>
    </source>
</evidence>
<evidence type="ECO:0000269" key="56">
    <source>
    </source>
</evidence>
<evidence type="ECO:0000269" key="57">
    <source>
    </source>
</evidence>
<evidence type="ECO:0000305" key="58"/>
<evidence type="ECO:0000305" key="59">
    <source>
    </source>
</evidence>
<evidence type="ECO:0000305" key="60">
    <source>
    </source>
</evidence>
<evidence type="ECO:0000312" key="61">
    <source>
        <dbReference type="HGNC" id="HGNC:20503"/>
    </source>
</evidence>
<evidence type="ECO:0000312" key="62">
    <source>
        <dbReference type="HGNC" id="HGNC:20505"/>
    </source>
</evidence>
<evidence type="ECO:0000312" key="63">
    <source>
        <dbReference type="HGNC" id="HGNC:25311"/>
    </source>
</evidence>
<evidence type="ECO:0007744" key="64">
    <source>
        <dbReference type="PDB" id="2IIJ"/>
    </source>
</evidence>
<evidence type="ECO:0007744" key="65">
    <source>
        <dbReference type="PDB" id="6X59"/>
    </source>
</evidence>
<evidence type="ECO:0007744" key="66">
    <source>
        <dbReference type="PDB" id="6X5A"/>
    </source>
</evidence>
<evidence type="ECO:0007744" key="67">
    <source>
        <dbReference type="PDB" id="6XJD"/>
    </source>
</evidence>
<evidence type="ECO:0007744" key="68">
    <source>
        <dbReference type="PDB" id="6Y5D"/>
    </source>
</evidence>
<evidence type="ECO:0007744" key="69">
    <source>
        <dbReference type="PDB" id="7JO9"/>
    </source>
</evidence>
<evidence type="ECO:0007744" key="70">
    <source>
        <dbReference type="PDB" id="7JOA"/>
    </source>
</evidence>
<evidence type="ECO:0007744" key="71">
    <source>
        <dbReference type="PDB" id="7TAN"/>
    </source>
</evidence>
<evidence type="ECO:0007744" key="72">
    <source>
    </source>
</evidence>
<evidence type="ECO:0007829" key="73">
    <source>
        <dbReference type="PDB" id="2X4Y"/>
    </source>
</evidence>
<evidence type="ECO:0007829" key="74">
    <source>
        <dbReference type="PDB" id="3R93"/>
    </source>
</evidence>
<evidence type="ECO:0007829" key="75">
    <source>
        <dbReference type="PDB" id="5B0Y"/>
    </source>
</evidence>
<evidence type="ECO:0007829" key="76">
    <source>
        <dbReference type="PDB" id="5B0Z"/>
    </source>
</evidence>
<evidence type="ECO:0007829" key="77">
    <source>
        <dbReference type="PDB" id="5VAC"/>
    </source>
</evidence>
<evidence type="ECO:0007829" key="78">
    <source>
        <dbReference type="PDB" id="6ACE"/>
    </source>
</evidence>
<evidence type="ECO:0007829" key="79">
    <source>
        <dbReference type="PDB" id="8HR1"/>
    </source>
</evidence>
<organism>
    <name type="scientific">Homo sapiens</name>
    <name type="common">Human</name>
    <dbReference type="NCBI Taxonomy" id="9606"/>
    <lineage>
        <taxon>Eukaryota</taxon>
        <taxon>Metazoa</taxon>
        <taxon>Chordata</taxon>
        <taxon>Craniata</taxon>
        <taxon>Vertebrata</taxon>
        <taxon>Euteleostomi</taxon>
        <taxon>Mammalia</taxon>
        <taxon>Eutheria</taxon>
        <taxon>Euarchontoglires</taxon>
        <taxon>Primates</taxon>
        <taxon>Haplorrhini</taxon>
        <taxon>Catarrhini</taxon>
        <taxon>Hominidae</taxon>
        <taxon>Homo</taxon>
    </lineage>
</organism>
<gene>
    <name evidence="62" type="primary">H3C15</name>
    <name evidence="62" type="synonym">HIST2H3A</name>
</gene>
<gene>
    <name evidence="61" type="primary">H3C14</name>
    <name type="synonym">H3F2</name>
    <name type="synonym">H3FM</name>
    <name evidence="61" type="synonym">HIST2H3C</name>
</gene>
<gene>
    <name evidence="63" type="primary">H3C13</name>
    <name evidence="63" type="synonym">HIST2H3D</name>
</gene>